<name>FOLH1_HUMAN</name>
<proteinExistence type="evidence at protein level"/>
<protein>
    <recommendedName>
        <fullName evidence="26">Glutamate carboxypeptidase 2</fullName>
        <ecNumber>3.4.17.21</ecNumber>
    </recommendedName>
    <alternativeName>
        <fullName>Cell growth-inhibiting gene 27 protein</fullName>
    </alternativeName>
    <alternativeName>
        <fullName>Folate hydrolase 1</fullName>
    </alternativeName>
    <alternativeName>
        <fullName>Folylpoly-gamma-glutamate carboxypeptidase</fullName>
        <shortName>FGCP</shortName>
    </alternativeName>
    <alternativeName>
        <fullName>Glutamate carboxypeptidase II</fullName>
        <shortName>GCPII</shortName>
    </alternativeName>
    <alternativeName>
        <fullName>Membrane glutamate carboxypeptidase</fullName>
        <shortName>mGCP</shortName>
    </alternativeName>
    <alternativeName>
        <fullName>N-acetylated-alpha-linked acidic dipeptidase I</fullName>
        <shortName>NAALADase I</shortName>
    </alternativeName>
    <alternativeName>
        <fullName>Prostate-specific membrane antigen</fullName>
        <shortName>PSM</shortName>
        <shortName>PSMA</shortName>
    </alternativeName>
    <alternativeName>
        <fullName>Pteroylpoly-gamma-glutamate carboxypeptidase</fullName>
    </alternativeName>
</protein>
<comment type="function">
    <text>Has both folate hydrolase and N-acetylated-alpha-linked-acidic dipeptidase (NAALADase) activity. Has a preference for tri-alpha-glutamate peptides. In the intestine, required for the uptake of folate. In the brain, modulates excitatory neurotransmission through the hydrolysis of the neuropeptide, N-aceylaspartylglutamate (NAAG), thereby releasing glutamate. Involved in prostate tumor progression.</text>
</comment>
<comment type="function">
    <text>Also exhibits a dipeptidyl-peptidase IV type activity. In vitro, cleaves Gly-Pro-AMC.</text>
</comment>
<comment type="catalytic activity">
    <reaction>
        <text>Release of an unsubstituted, C-terminal glutamyl residue, typically from Ac-Asp-Glu or folylpoly-gamma-glutamates.</text>
        <dbReference type="EC" id="3.4.17.21"/>
    </reaction>
</comment>
<comment type="cofactor">
    <cofactor evidence="8 12 13 14 15 16">
        <name>Zn(2+)</name>
        <dbReference type="ChEBI" id="CHEBI:29105"/>
    </cofactor>
    <text evidence="8">Binds 2 Zn(2+) ions per subunit. Required for NAALADase activity.</text>
</comment>
<comment type="activity regulation">
    <text evidence="13">The NAALADase activity is inhibited by beta-NAAG, quisqualic acid, 2-(phosphonomethyl) pentanedioic acid (PMPA) and EDTA. Activated by cobalt.</text>
</comment>
<comment type="biophysicochemical properties">
    <phDependence>
        <text>Stable at pH greater than 6.5.</text>
    </phDependence>
</comment>
<comment type="subunit">
    <text evidence="8 16">Homodimer.</text>
</comment>
<comment type="interaction">
    <interactant intactId="EBI-13060980">
        <id>Q04609-8</id>
    </interactant>
    <interactant intactId="EBI-10243654">
        <id>Q5BVD1</id>
        <label>TTMP</label>
    </interactant>
    <organismsDiffer>false</organismsDiffer>
    <experiments>3</experiments>
</comment>
<comment type="subcellular location">
    <subcellularLocation>
        <location evidence="18">Cell membrane</location>
        <topology evidence="18">Single-pass type II membrane protein</topology>
    </subcellularLocation>
</comment>
<comment type="subcellular location">
    <molecule>Isoform PSMA'</molecule>
    <subcellularLocation>
        <location evidence="18">Cytoplasm</location>
    </subcellularLocation>
</comment>
<comment type="alternative products">
    <event type="alternative splicing"/>
    <isoform>
        <id>Q04609-1</id>
        <name>PSMA-1</name>
        <sequence type="displayed"/>
    </isoform>
    <isoform>
        <id>Q04609-3</id>
        <name>PSMA-3</name>
        <sequence type="described" ref="VSP_040245"/>
    </isoform>
    <isoform>
        <id>Q04609-4</id>
        <name>PSMA-4</name>
        <sequence type="described" ref="VSP_040243 VSP_040244"/>
    </isoform>
    <isoform>
        <id>Q04609-6</id>
        <name>PSMA'</name>
        <sequence type="described" ref="VSP_005336"/>
    </isoform>
    <isoform>
        <id>Q04609-7</id>
        <name>PSMA-7</name>
        <sequence type="described" ref="VSP_038058"/>
    </isoform>
    <isoform>
        <id>Q04609-8</id>
        <name>PSMA-8</name>
        <sequence type="described" ref="VSP_038059"/>
    </isoform>
    <isoform>
        <id>Q04609-9</id>
        <name>PSMA-9</name>
        <name>PSM-E</name>
        <sequence type="described" ref="VSP_038058 VSP_038059"/>
    </isoform>
    <isoform>
        <id>Q04609-10</id>
        <name>10</name>
        <sequence type="described" ref="VSP_044287"/>
    </isoform>
</comment>
<comment type="tissue specificity">
    <text evidence="4 6 9 11">Highly expressed in prostate epithelium. Detected in urinary bladder, kidney, testis, ovary, fallopian tube, breast, adrenal gland, liver, esophagus, stomach, small intestine, colon and brain (at protein level). Detected in the small intestine, brain, kidney, liver, spleen, colon, trachea, spinal cord and the capillary endothelium of a variety of tumors. Expressed specifically in jejunum brush border membranes. In the brain, highly expressed in the ventral striatum and brain stem. Also expressed in fetal liver and kidney. Isoform PSMA' is the most abundant form in normal prostate. Isoform PSMA-1 is the most abundant form in primary prostate tumors. Isoform PSMA-9 is specifically expressed in prostate cancer.</text>
</comment>
<comment type="induction">
    <text>In the prostate, up-regulated in response to androgen deprivation.</text>
</comment>
<comment type="domain">
    <text evidence="17">The NAALADase activity is found in the central region, the dipeptidyl peptidase IV type activity in the C-terminal.</text>
</comment>
<comment type="PTM">
    <text>The first two amino acids at the N-terminus of isoform PSMA' appear to be cleaved by limited proteolysis.</text>
</comment>
<comment type="PTM">
    <text>The N-terminus is blocked.</text>
</comment>
<comment type="polymorphism">
    <text>Genetic variation in FOLH1 may be associated with low folate levels and consequent hyperhomocysteinemia. This condition can result in increased risk of cardiovascular disease, neural tube defects, and cognitive deficits.</text>
</comment>
<comment type="miscellaneous">
    <text>PSMA is used as a diagnostic and prognostic indicator of prostate cancer, and as a possible marker for various neurological disorders such as schizophrenia, Alzheimer disease and Huntington disease.</text>
</comment>
<comment type="similarity">
    <text evidence="26">Belongs to the peptidase M28 family. M28B subfamily.</text>
</comment>
<comment type="sequence caution" evidence="26">
    <conflict type="erroneous gene model prediction">
        <sequence resource="EMBL-CDS" id="AAF31167"/>
    </conflict>
</comment>
<feature type="chain" id="PRO_0000174117" description="Glutamate carboxypeptidase 2">
    <location>
        <begin position="1"/>
        <end position="750"/>
    </location>
</feature>
<feature type="topological domain" description="Cytoplasmic" evidence="26">
    <location>
        <begin position="1"/>
        <end position="19"/>
    </location>
</feature>
<feature type="transmembrane region" description="Helical; Signal-anchor for type II membrane protein" evidence="26">
    <location>
        <begin position="20"/>
        <end position="43"/>
    </location>
</feature>
<feature type="topological domain" description="Extracellular" evidence="26">
    <location>
        <begin position="44"/>
        <end position="750"/>
    </location>
</feature>
<feature type="region of interest" description="NAALADase">
    <location>
        <begin position="274"/>
        <end position="587"/>
    </location>
</feature>
<feature type="active site" description="Nucleophile; for NAALADase activity">
    <location>
        <position position="424"/>
    </location>
</feature>
<feature type="active site" description="Charge relay system" evidence="3">
    <location>
        <position position="628"/>
    </location>
</feature>
<feature type="active site" description="Charge relay system" evidence="3">
    <location>
        <position position="666"/>
    </location>
</feature>
<feature type="active site" description="Charge relay system" evidence="3">
    <location>
        <position position="689"/>
    </location>
</feature>
<feature type="binding site" evidence="8 12 13 14 15 16 29 30 33 34 36 38 39 40 41 42 43 44 45 47 48 49 50 51 52 53 54 55 56 58 59 60 61 62 63 64 65 66 67 68 69 70 71 72 73 74 75 76 77 78 79 80 81 82 83 84 85">
    <location>
        <position position="210"/>
    </location>
    <ligand>
        <name>substrate</name>
    </ligand>
</feature>
<feature type="binding site" evidence="8 12 13 14 15 16 29 30 33 34 36 38 39 40 41 42 43 44 45 47 48 49 50 52 56 57 58 59 60 61 62 63 64 65 66 67 68 69 70 72 77 78 79 80 81 82 83 84 85">
    <location>
        <position position="257"/>
    </location>
    <ligand>
        <name>substrate</name>
    </ligand>
</feature>
<feature type="binding site" evidence="8 12 13 14 15 16 29 30 31 32 33 34 35 36 37 38 39 40 41 42 43 44 45 46 47 48 49 50 51 52 53 54 55 56 57 58 59 60 61 62 63 64 65 66 67 68 69 70 71 72 73 74 75 76 77 78 79 80 81 82 83 84 85">
    <location>
        <position position="269"/>
    </location>
    <ligand>
        <name>Ca(2+)</name>
        <dbReference type="ChEBI" id="CHEBI:29108"/>
    </ligand>
</feature>
<feature type="binding site" evidence="8 12 13 14 15 16 29 30 31 32 33 34 35 36 37 38 39 40 41 42 43 44 45 46 47 48 49 50 51 52 53 54 55 56 57 58 59 60 61 62 63 64 65 66 67 68 69 70 71 72 73 74 75 76 77 78 79 80 81 82 83 84 85">
    <location>
        <position position="272"/>
    </location>
    <ligand>
        <name>Ca(2+)</name>
        <dbReference type="ChEBI" id="CHEBI:29108"/>
    </ligand>
</feature>
<feature type="binding site" evidence="8 12 13 14 15 16 28 29 30 31 32 33 34 35 36 37 38 39 40 41 42 43 44 45 46 47 48 49 50 51 52 53 54 55 56 57 58 59 60 61 62 63 64 65 66 67 68 69 70 71 72 73 74 75 76 77 78 79 80 81 82 83 84 85">
    <location>
        <position position="377"/>
    </location>
    <ligand>
        <name>Zn(2+)</name>
        <dbReference type="ChEBI" id="CHEBI:29105"/>
        <label>1</label>
        <note>catalytic</note>
    </ligand>
</feature>
<feature type="binding site" evidence="8 12 13 14 15 16 28 29 30 31 32 33 34 35 36 37 38 39 40 41 42 43 44 45 46 47 48 49 50 51 52 53 54 55 56 57 58 59 60 61 62 63 64 65 66 67 68 69 70 71 72 73 74 75 76 77 78 79 80 81 82 83 84 85">
    <location>
        <position position="387"/>
    </location>
    <ligand>
        <name>Zn(2+)</name>
        <dbReference type="ChEBI" id="CHEBI:29105"/>
        <label>1</label>
        <note>catalytic</note>
    </ligand>
</feature>
<feature type="binding site" evidence="8 12 13 14 15 16 28 29 30 31 32 33 34 35 36 37 38 39 40 41 42 43 44 45 46 47 48 49 50 51 52 53 54 55 56 57 58 59 60 61 62 63 64 65 66 67 68 69 70 71 72 73 74 75 76 77 78 79 80 81 82 83 84 85">
    <location>
        <position position="387"/>
    </location>
    <ligand>
        <name>Zn(2+)</name>
        <dbReference type="ChEBI" id="CHEBI:29105"/>
        <label>2</label>
    </ligand>
</feature>
<feature type="binding site" evidence="2">
    <location>
        <position position="424"/>
    </location>
    <ligand>
        <name>substrate</name>
    </ligand>
</feature>
<feature type="binding site" evidence="8 12 13 14 15 16 28 29 30 31 32 33 34 35 36 37 38 39 40 41 42 43 44 45 46 47 48 49 50 51 52 53 54 55 56 57 58 59 60 61 62 63 64 65 66 67 68 69 70 71 72 73 74 75 76 77 78 79 80 81 82 83 84 85">
    <location>
        <position position="425"/>
    </location>
    <ligand>
        <name>Zn(2+)</name>
        <dbReference type="ChEBI" id="CHEBI:29105"/>
        <label>2</label>
    </ligand>
</feature>
<feature type="binding site" evidence="8 12 13 14 15 16 29 30 31 32 33 34 35 36 37 38 39 40 41 42 43 44 45 46 47 48 49 50 51 52 53 54 55 56 57 58 59 60 61 62 63 64 65 66 67 68 69 70 71 72 73 74 75 76 77 78 79 80 81 82 83 84 85">
    <location>
        <position position="433"/>
    </location>
    <ligand>
        <name>Ca(2+)</name>
        <dbReference type="ChEBI" id="CHEBI:29108"/>
    </ligand>
</feature>
<feature type="binding site" evidence="8 12 13 14 15 16 29 30 31 32 33 34 35 36 37 38 39 40 41 42 43 44 45 46 47 48 49 50 51 52 53 54 55 56 57 58 59 60 61 62 63 64 65 66 67 68 69 70 71 72 73 74 75 76 77 78 79 80 81 82 83 84 85">
    <location>
        <position position="436"/>
    </location>
    <ligand>
        <name>Ca(2+)</name>
        <dbReference type="ChEBI" id="CHEBI:29108"/>
    </ligand>
</feature>
<feature type="binding site" evidence="8 12 13 14 15 16 28 29 30 31 32 33 34 35 36 37 38 39 40 41 42 43 44 45 46 47 48 49 50 51 52 53 54 55 56 57 58 59 60 61 62 63 64 65 66 67 68 69 70 71 72 73 74 75 76 77 78 79 80 81 82 83 84 85">
    <location>
        <position position="453"/>
    </location>
    <ligand>
        <name>Zn(2+)</name>
        <dbReference type="ChEBI" id="CHEBI:29105"/>
        <label>1</label>
        <note>catalytic</note>
    </ligand>
</feature>
<feature type="binding site" evidence="2">
    <location>
        <begin position="517"/>
        <end position="518"/>
    </location>
    <ligand>
        <name>substrate</name>
    </ligand>
</feature>
<feature type="binding site" evidence="8 12 13 14 15 16 30 33 34 36 39 40 41 42 43 44 45 47 48 49 50 51 53 54 55 56 58 59 60 61 62 63 64 65 66 67 68 69 70 71 72 73 74 75 76 77 78 79 80 81 82 83 84 85">
    <location>
        <position position="519"/>
    </location>
    <ligand>
        <name>substrate</name>
    </ligand>
</feature>
<feature type="binding site" evidence="14 15 39 40 41 42 43 44 45 47 48 49 50 51 53 54 55 56 58 59 60 61 62 63 64 65 66 67 68 69 70 71 72 73 74 75 76 77 78 79 80 81 83 84 85">
    <location>
        <begin position="534"/>
        <end position="536"/>
    </location>
    <ligand>
        <name>substrate</name>
    </ligand>
</feature>
<feature type="binding site" evidence="2">
    <location>
        <begin position="552"/>
        <end position="553"/>
    </location>
    <ligand>
        <name>substrate</name>
    </ligand>
</feature>
<feature type="binding site" evidence="8 12 13 14 15 16 29 30 33 36 38 39 40 41 42 43 44 45 47 48 49 50 51 52 53 54 55 56 57 58 59 60 61 62 63 64 65 66 67 68 69 70 71 72 73 74 75 76 77 78 79 80 81 82 83 84 85">
    <location>
        <position position="552"/>
    </location>
    <ligand>
        <name>substrate</name>
    </ligand>
</feature>
<feature type="binding site" evidence="8 12 13 14 15 16 28 29 30 31 32 33 34 35 36 37 38 39 40 41 42 43 44 45 46 47 48 49 50 51 52 53 54 55 56 57 58 59 60 61 62 63 64 65 66 67 68 69 70 71 72 73 74 75 76 77 78 79 80 81 82 83 84 85">
    <location>
        <position position="553"/>
    </location>
    <ligand>
        <name>Zn(2+)</name>
        <dbReference type="ChEBI" id="CHEBI:29105"/>
        <label>2</label>
    </ligand>
</feature>
<feature type="binding site" evidence="8 12 13 14 15 29 30 33 34 36 38 39 40 41 42 43 44 45 47 48 49 50 51 52 54 56 57 58 59 60 61 62 63 64 65 66 67 68 69 70 71 72 73 74 75 76 77 78 79 80 81 82 83 84 85">
    <location>
        <begin position="699"/>
        <end position="700"/>
    </location>
    <ligand>
        <name>substrate</name>
    </ligand>
</feature>
<feature type="modified residue" description="Phosphoserine" evidence="1">
    <location>
        <position position="10"/>
    </location>
</feature>
<feature type="glycosylation site" description="N-linked (GlcNAc...) asparagine" evidence="7">
    <location>
        <position position="51"/>
    </location>
</feature>
<feature type="glycosylation site" description="N-linked (GlcNAc...) asparagine" evidence="5 7 8 12 13 14 15 16 28 29 30 31 32 33 34 35 36 37 38 39 40 41 42 43 44 45 46 47 48 49 50 51 52 53 54 55 56 57 58 59 60 61 62 63 64 65 66 67 68 69 70 71 72 73 74 75 76 77 78 79 80 81 82 83 84 85">
    <location>
        <position position="76"/>
    </location>
</feature>
<feature type="glycosylation site" description="N-linked (GlcNAc...) asparagine" evidence="7 8 12 13 14 15 16 28 29 30 32 33 34 35 36 37 38 39 40 41 42 43 44 45 46 47 48 49 50 51 52 53 54 55 56 57 58 59 60 61 62 63 64 65 66 67 68 69 70 71 72 73 74 75 76 77 78 79 80 81 82 83 84 85">
    <location>
        <position position="121"/>
    </location>
</feature>
<feature type="glycosylation site" description="N-linked (GlcNAc...) asparagine" evidence="7 8 12 13 14 15 16 28 29 30 31 32 33 34 35 36 37 38 39 40 41 42 43 44 45 46 47 48 49 50 51 52 53 54 55 57 58 59 60 61 62 63 64 65 66 67 68 69 70 71 72 73 74 75 76 77 78 79 80 81 82 83 84 85">
    <location>
        <position position="140"/>
    </location>
</feature>
<feature type="glycosylation site" description="N-linked (GlcNAc...) asparagine" evidence="7 28">
    <location>
        <position position="153"/>
    </location>
</feature>
<feature type="glycosylation site" description="N-linked (GlcNAc...) asparagine" evidence="7 8 12 13 14 15 16 29 32 33 34 35 36 37 38 39 40 41 42 43 44 45 46 47 48 49 50 51 52 53 54 55 56 57 58 59 60 61 62 63 64 65 66 67 68 69 71 72 73 74 75 76 77 78 79 80 81 82 83 84 85">
    <location>
        <position position="195"/>
    </location>
</feature>
<feature type="glycosylation site" description="N-linked (GlcNAc...) asparagine" evidence="5 7">
    <location>
        <position position="336"/>
    </location>
</feature>
<feature type="glycosylation site" description="N-linked (GlcNAc...) asparagine" evidence="5 7 8 12 13 14 15 16 28 29 30 31 32 33 34 35 36 37 38 39 40 41 42 43 44 45 46 47 48 49 50 51 52 53 54 55 56 57 58 59 60 61 62 63 64 65 66 67 68 69 70 71 72 73 74 75 76 77 78 79 80 81 82 83 84 85">
    <location>
        <position position="459"/>
    </location>
</feature>
<feature type="glycosylation site" description="N-linked (GlcNAc...) asparagine" evidence="5 7 8 12 13 14 15 16 28 29 30 31 32 33 34 35 36 37 38 39 40 41 42 43 44 45 46 47 48 49 50 51 52 53 54 55 56 57 58 59 60 61 62 63 64 65 66 67 68 69 70 71 72 73 74 75 76 77 78 79 80 81 82 83 84 85">
    <location>
        <position position="476"/>
    </location>
</feature>
<feature type="glycosylation site" description="N-linked (GlcNAc...) asparagine" evidence="5 7 8 12 13 14 15 16 28 29 30 31 32 33 34 35 36 37 38 39 40 41 42 43 44 45 46 47 48 49 50 51 52 53 54 55 56 57 58 59 60 61 62 63 64 65 66 67 68 69 70 71 72 73 74 75 76 77 78 79 80 81 82 83 84 85">
    <location>
        <position position="638"/>
    </location>
</feature>
<feature type="splice variant" id="VSP_044287" description="In isoform 10." evidence="21">
    <location>
        <begin position="1"/>
        <end position="308"/>
    </location>
</feature>
<feature type="splice variant" id="VSP_005336" description="In isoform PSMA'." evidence="24">
    <location>
        <begin position="1"/>
        <end position="57"/>
    </location>
</feature>
<feature type="splice variant" id="VSP_038058" description="In isoform PSMA-7 and isoform PSMA-9." evidence="21 23">
    <original>MWNLLHETDSAVATARRPRWLCAGALVLAGGFFLLGFLF</original>
    <variation>MTAGSSYPLFLAAYACTGCLAERL</variation>
    <location>
        <begin position="1"/>
        <end position="39"/>
    </location>
</feature>
<feature type="splice variant" id="VSP_040243" description="In isoform PSMA-4." evidence="26">
    <original>VKNAQLAGAKGVILYSDPADYFAPGVKSYP</original>
    <variation>NMLIGVELQRLLVFQVFLFIQLDTMMHRSS</variation>
    <location>
        <begin position="214"/>
        <end position="243"/>
    </location>
</feature>
<feature type="splice variant" id="VSP_040244" description="In isoform PSMA-4." evidence="26">
    <location>
        <begin position="244"/>
        <end position="750"/>
    </location>
</feature>
<feature type="splice variant" id="VSP_040245" description="In isoform PSMA-3." evidence="26">
    <original>NPIVLRMMNDQLMFLERAFIDPLGLPDRPFYRHVIYAPSSHNKYAGESFPGIYDALFDIESKVDPSKAWGEVKRQIYVAAFTVQAAAETLSEVA</original>
    <variation>MSSMLQAATTSMQGSHSQEFMMLCLILKAKWTLPRPGEK</variation>
    <location>
        <begin position="657"/>
        <end position="750"/>
    </location>
</feature>
<feature type="splice variant" id="VSP_038059" description="In isoform PSMA-8 and isoform PSMA-9." evidence="22 23 25">
    <original>NPIVLRMMNDQLMFLERAFIDPLGLPDRPFYR</original>
    <variation>K</variation>
    <location>
        <begin position="657"/>
        <end position="688"/>
    </location>
</feature>
<feature type="sequence variant" id="VAR_036398" description="In a colorectal cancer sample; somatic mutation." evidence="10">
    <original>A</original>
    <variation>T</variation>
    <location>
        <position position="23"/>
    </location>
</feature>
<feature type="sequence variant" id="VAR_024592" description="In dbSNP:rs202676." evidence="19">
    <original>Y</original>
    <variation>H</variation>
    <location>
        <position position="75"/>
    </location>
</feature>
<feature type="sequence variant" id="VAR_012736" description="Correlates with lower folate and higher homocysteine levels; dbSNP:rs61886492." evidence="4">
    <original>H</original>
    <variation>Y</variation>
    <location>
        <position position="475"/>
    </location>
</feature>
<feature type="sequence variant" id="VAR_028882" description="In dbSNP:rs2988342.">
    <original>V</original>
    <variation>L</variation>
    <location>
        <position position="627"/>
    </location>
</feature>
<feature type="mutagenesis site" description="Loss of glycosylation. Reduces enzyme activity." evidence="7">
    <original>N</original>
    <variation>A</variation>
    <location>
        <position position="51"/>
    </location>
</feature>
<feature type="mutagenesis site" description="Loss of glycosylation. Reduces enzyme activity." evidence="7">
    <original>N</original>
    <variation>A</variation>
    <location>
        <position position="76"/>
    </location>
</feature>
<feature type="mutagenesis site" description="Loss of glycosylation. Severely reduced enzyme activity." evidence="7">
    <original>N</original>
    <variation>A</variation>
    <location>
        <position position="121"/>
    </location>
</feature>
<feature type="mutagenesis site" description="Loss of glycosylation. Severely reduced enzyme activity." evidence="7">
    <original>N</original>
    <variation>A</variation>
    <location>
        <position position="140"/>
    </location>
</feature>
<feature type="mutagenesis site" description="Loss of glycosylation. Severely reduced enzyme activity." evidence="7">
    <original>N</original>
    <variation>A</variation>
    <location>
        <position position="153"/>
    </location>
</feature>
<feature type="mutagenesis site" description="Loss of glycosylation. Severely reduced enzyme activity." evidence="7">
    <original>N</original>
    <variation>A</variation>
    <location>
        <position position="195"/>
    </location>
</feature>
<feature type="mutagenesis site" description="Loss of glycosylation. Reduces enzyme activity." evidence="7">
    <original>N</original>
    <variation>A</variation>
    <location>
        <position position="336"/>
    </location>
</feature>
<feature type="mutagenesis site" description="Complete loss of activity." evidence="20">
    <original>H</original>
    <variation>A</variation>
    <variation>G</variation>
    <variation>Q</variation>
    <location>
        <position position="377"/>
    </location>
</feature>
<feature type="mutagenesis site" description="Complete loss of activity." evidence="20">
    <original>D</original>
    <variation>E</variation>
    <variation>N</variation>
    <location>
        <position position="379"/>
    </location>
</feature>
<feature type="mutagenesis site" description="Complete loss of activity." evidence="20">
    <original>D</original>
    <variation>E</variation>
    <variation>L</variation>
    <location>
        <position position="387"/>
    </location>
</feature>
<feature type="mutagenesis site" description="No effect on enzyme activity." evidence="20">
    <original>D</original>
    <variation>N</variation>
    <location>
        <position position="387"/>
    </location>
</feature>
<feature type="mutagenesis site" description="No effect on enzyme activity." evidence="20">
    <original>P</original>
    <variation>A</variation>
    <location>
        <position position="388"/>
    </location>
</feature>
<feature type="mutagenesis site" description="Complete loss of activity." evidence="16">
    <original>E</original>
    <variation>A</variation>
    <location>
        <position position="424"/>
    </location>
</feature>
<feature type="mutagenesis site" description="Reduces enzyme activity." evidence="16">
    <original>E</original>
    <variation>D</variation>
    <location>
        <position position="424"/>
    </location>
</feature>
<feature type="mutagenesis site" description="Reduces enzyme activity." evidence="16">
    <original>E</original>
    <variation>Q</variation>
    <location>
        <position position="424"/>
    </location>
</feature>
<feature type="mutagenesis site" description="Complete loss of activity." evidence="20">
    <original>E</original>
    <variation>Q</variation>
    <variation>D</variation>
    <location>
        <position position="425"/>
    </location>
</feature>
<feature type="mutagenesis site" description="Complete loss of activity." evidence="20">
    <original>D</original>
    <variation>N</variation>
    <variation>L</variation>
    <location>
        <position position="453"/>
    </location>
</feature>
<feature type="mutagenesis site" description="Reduces enzyme activity." evidence="20">
    <original>D</original>
    <variation>Q</variation>
    <location>
        <position position="453"/>
    </location>
</feature>
<feature type="mutagenesis site" description="Reduces enzyme activity." evidence="20">
    <original>S</original>
    <variation>A</variation>
    <location>
        <position position="454"/>
    </location>
</feature>
<feature type="mutagenesis site" description="Loss of glycosylation. Reduces enzyme activity." evidence="7">
    <original>N</original>
    <variation>A</variation>
    <location>
        <position position="459"/>
    </location>
</feature>
<feature type="mutagenesis site" description="Loss of glycosylation. Reduces enzyme activity." evidence="7">
    <original>N</original>
    <variation>A</variation>
    <location>
        <position position="476"/>
    </location>
</feature>
<feature type="mutagenesis site" description="Loss of glycosylation. Abolishes enzyme activity." evidence="7">
    <original>N</original>
    <variation>A</variation>
    <location>
        <position position="638"/>
    </location>
</feature>
<feature type="mutagenesis site" description="Abolishes enzyme activity." evidence="7">
    <original>T</original>
    <variation>A</variation>
    <location>
        <position position="640"/>
    </location>
</feature>
<feature type="sequence conflict" description="In Ref. 9; AAZ66619." evidence="26" ref="9">
    <original>I</original>
    <variation>V</variation>
    <location>
        <position position="194"/>
    </location>
</feature>
<feature type="sequence conflict" description="In Ref. 1; AA sequence." evidence="26" ref="1">
    <original>R</original>
    <variation>K</variation>
    <location>
        <position position="354"/>
    </location>
</feature>
<feature type="sequence conflict" description="In Ref. 8; ABO93402." evidence="26" ref="8">
    <original>I</original>
    <variation>N</variation>
    <location>
        <position position="398"/>
    </location>
</feature>
<feature type="helix" evidence="92">
    <location>
        <begin position="58"/>
        <end position="64"/>
    </location>
</feature>
<feature type="helix" evidence="92">
    <location>
        <begin position="67"/>
        <end position="77"/>
    </location>
</feature>
<feature type="strand" evidence="92">
    <location>
        <begin position="78"/>
        <end position="80"/>
    </location>
</feature>
<feature type="helix" evidence="92">
    <location>
        <begin position="87"/>
        <end position="102"/>
    </location>
</feature>
<feature type="strand" evidence="92">
    <location>
        <begin position="106"/>
        <end position="119"/>
    </location>
</feature>
<feature type="strand" evidence="87">
    <location>
        <begin position="122"/>
        <end position="124"/>
    </location>
</feature>
<feature type="strand" evidence="92">
    <location>
        <begin position="127"/>
        <end position="131"/>
    </location>
</feature>
<feature type="strand" evidence="92">
    <location>
        <begin position="137"/>
        <end position="140"/>
    </location>
</feature>
<feature type="turn" evidence="89">
    <location>
        <begin position="149"/>
        <end position="151"/>
    </location>
</feature>
<feature type="helix" evidence="90">
    <location>
        <begin position="154"/>
        <end position="156"/>
    </location>
</feature>
<feature type="strand" evidence="92">
    <location>
        <begin position="174"/>
        <end position="176"/>
    </location>
</feature>
<feature type="helix" evidence="92">
    <location>
        <begin position="182"/>
        <end position="190"/>
    </location>
</feature>
<feature type="strand" evidence="92">
    <location>
        <begin position="200"/>
        <end position="204"/>
    </location>
</feature>
<feature type="helix" evidence="92">
    <location>
        <begin position="210"/>
        <end position="219"/>
    </location>
</feature>
<feature type="strand" evidence="92">
    <location>
        <begin position="223"/>
        <end position="228"/>
    </location>
</feature>
<feature type="helix" evidence="92">
    <location>
        <begin position="231"/>
        <end position="234"/>
    </location>
</feature>
<feature type="strand" evidence="92">
    <location>
        <begin position="244"/>
        <end position="247"/>
    </location>
</feature>
<feature type="strand" evidence="86">
    <location>
        <begin position="269"/>
        <end position="272"/>
    </location>
</feature>
<feature type="helix" evidence="92">
    <location>
        <begin position="283"/>
        <end position="285"/>
    </location>
</feature>
<feature type="strand" evidence="92">
    <location>
        <begin position="294"/>
        <end position="297"/>
    </location>
</feature>
<feature type="helix" evidence="92">
    <location>
        <begin position="299"/>
        <end position="306"/>
    </location>
</feature>
<feature type="helix" evidence="92">
    <location>
        <begin position="317"/>
        <end position="319"/>
    </location>
</feature>
<feature type="strand" evidence="92">
    <location>
        <begin position="322"/>
        <end position="325"/>
    </location>
</feature>
<feature type="strand" evidence="92">
    <location>
        <begin position="330"/>
        <end position="333"/>
    </location>
</feature>
<feature type="helix" evidence="92">
    <location>
        <begin position="335"/>
        <end position="337"/>
    </location>
</feature>
<feature type="strand" evidence="92">
    <location>
        <begin position="341"/>
        <end position="346"/>
    </location>
</feature>
<feature type="strand" evidence="92">
    <location>
        <begin position="349"/>
        <end position="362"/>
    </location>
</feature>
<feature type="strand" evidence="92">
    <location>
        <begin position="365"/>
        <end position="377"/>
    </location>
</feature>
<feature type="strand" evidence="92">
    <location>
        <begin position="381"/>
        <end position="383"/>
    </location>
</feature>
<feature type="turn" evidence="92">
    <location>
        <begin position="385"/>
        <end position="388"/>
    </location>
</feature>
<feature type="helix" evidence="92">
    <location>
        <begin position="389"/>
        <end position="407"/>
    </location>
</feature>
<feature type="strand" evidence="92">
    <location>
        <begin position="413"/>
        <end position="422"/>
    </location>
</feature>
<feature type="helix" evidence="92">
    <location>
        <begin position="424"/>
        <end position="426"/>
    </location>
</feature>
<feature type="helix" evidence="92">
    <location>
        <begin position="429"/>
        <end position="437"/>
    </location>
</feature>
<feature type="helix" evidence="92">
    <location>
        <begin position="439"/>
        <end position="445"/>
    </location>
</feature>
<feature type="strand" evidence="92">
    <location>
        <begin position="446"/>
        <end position="451"/>
    </location>
</feature>
<feature type="strand" evidence="92">
    <location>
        <begin position="455"/>
        <end position="457"/>
    </location>
</feature>
<feature type="strand" evidence="92">
    <location>
        <begin position="459"/>
        <end position="466"/>
    </location>
</feature>
<feature type="helix" evidence="92">
    <location>
        <begin position="468"/>
        <end position="470"/>
    </location>
</feature>
<feature type="helix" evidence="92">
    <location>
        <begin position="471"/>
        <end position="479"/>
    </location>
</feature>
<feature type="strand" evidence="92">
    <location>
        <begin position="480"/>
        <end position="482"/>
    </location>
</feature>
<feature type="turn" evidence="88">
    <location>
        <begin position="486"/>
        <end position="490"/>
    </location>
</feature>
<feature type="helix" evidence="92">
    <location>
        <begin position="493"/>
        <end position="500"/>
    </location>
</feature>
<feature type="strand" evidence="92">
    <location>
        <begin position="504"/>
        <end position="506"/>
    </location>
</feature>
<feature type="strand" evidence="91">
    <location>
        <begin position="507"/>
        <end position="510"/>
    </location>
</feature>
<feature type="strand" evidence="92">
    <location>
        <begin position="517"/>
        <end position="519"/>
    </location>
</feature>
<feature type="helix" evidence="92">
    <location>
        <begin position="521"/>
        <end position="525"/>
    </location>
</feature>
<feature type="turn" evidence="92">
    <location>
        <begin position="526"/>
        <end position="528"/>
    </location>
</feature>
<feature type="strand" evidence="92">
    <location>
        <begin position="531"/>
        <end position="538"/>
    </location>
</feature>
<feature type="turn" evidence="92">
    <location>
        <begin position="541"/>
        <end position="543"/>
    </location>
</feature>
<feature type="strand" evidence="92">
    <location>
        <begin position="546"/>
        <end position="548"/>
    </location>
</feature>
<feature type="turn" evidence="92">
    <location>
        <begin position="550"/>
        <end position="553"/>
    </location>
</feature>
<feature type="helix" evidence="92">
    <location>
        <begin position="559"/>
        <end position="565"/>
    </location>
</feature>
<feature type="helix" evidence="92">
    <location>
        <begin position="571"/>
        <end position="589"/>
    </location>
</feature>
<feature type="helix" evidence="92">
    <location>
        <begin position="597"/>
        <end position="615"/>
    </location>
</feature>
<feature type="helix" evidence="92">
    <location>
        <begin position="619"/>
        <end position="625"/>
    </location>
</feature>
<feature type="helix" evidence="92">
    <location>
        <begin position="630"/>
        <end position="652"/>
    </location>
</feature>
<feature type="helix" evidence="92">
    <location>
        <begin position="658"/>
        <end position="673"/>
    </location>
</feature>
<feature type="strand" evidence="86">
    <location>
        <begin position="684"/>
        <end position="686"/>
    </location>
</feature>
<feature type="strand" evidence="92">
    <location>
        <begin position="689"/>
        <end position="695"/>
    </location>
</feature>
<feature type="strand" evidence="92">
    <location>
        <begin position="698"/>
        <end position="705"/>
    </location>
</feature>
<feature type="helix" evidence="92">
    <location>
        <begin position="706"/>
        <end position="712"/>
    </location>
</feature>
<feature type="helix" evidence="92">
    <location>
        <begin position="715"/>
        <end position="717"/>
    </location>
</feature>
<feature type="helix" evidence="92">
    <location>
        <begin position="721"/>
        <end position="744"/>
    </location>
</feature>
<organism>
    <name type="scientific">Homo sapiens</name>
    <name type="common">Human</name>
    <dbReference type="NCBI Taxonomy" id="9606"/>
    <lineage>
        <taxon>Eukaryota</taxon>
        <taxon>Metazoa</taxon>
        <taxon>Chordata</taxon>
        <taxon>Craniata</taxon>
        <taxon>Vertebrata</taxon>
        <taxon>Euteleostomi</taxon>
        <taxon>Mammalia</taxon>
        <taxon>Eutheria</taxon>
        <taxon>Euarchontoglires</taxon>
        <taxon>Primates</taxon>
        <taxon>Haplorrhini</taxon>
        <taxon>Catarrhini</taxon>
        <taxon>Hominidae</taxon>
        <taxon>Homo</taxon>
    </lineage>
</organism>
<evidence type="ECO:0000250" key="1">
    <source>
        <dbReference type="UniProtKB" id="P70627"/>
    </source>
</evidence>
<evidence type="ECO:0000250" key="2">
    <source>
        <dbReference type="UniProtKB" id="Q9Y3Q0"/>
    </source>
</evidence>
<evidence type="ECO:0000255" key="3"/>
<evidence type="ECO:0000269" key="4">
    <source>
    </source>
</evidence>
<evidence type="ECO:0000269" key="5">
    <source>
    </source>
</evidence>
<evidence type="ECO:0000269" key="6">
    <source>
    </source>
</evidence>
<evidence type="ECO:0000269" key="7">
    <source>
    </source>
</evidence>
<evidence type="ECO:0000269" key="8">
    <source>
    </source>
</evidence>
<evidence type="ECO:0000269" key="9">
    <source>
    </source>
</evidence>
<evidence type="ECO:0000269" key="10">
    <source>
    </source>
</evidence>
<evidence type="ECO:0000269" key="11">
    <source>
    </source>
</evidence>
<evidence type="ECO:0000269" key="12">
    <source>
    </source>
</evidence>
<evidence type="ECO:0000269" key="13">
    <source>
    </source>
</evidence>
<evidence type="ECO:0000269" key="14">
    <source>
    </source>
</evidence>
<evidence type="ECO:0000269" key="15">
    <source>
    </source>
</evidence>
<evidence type="ECO:0000269" key="16">
    <source>
    </source>
</evidence>
<evidence type="ECO:0000269" key="17">
    <source>
    </source>
</evidence>
<evidence type="ECO:0000269" key="18">
    <source>
    </source>
</evidence>
<evidence type="ECO:0000269" key="19">
    <source>
    </source>
</evidence>
<evidence type="ECO:0000269" key="20">
    <source>
    </source>
</evidence>
<evidence type="ECO:0000303" key="21">
    <source>
    </source>
</evidence>
<evidence type="ECO:0000303" key="22">
    <source>
    </source>
</evidence>
<evidence type="ECO:0000303" key="23">
    <source>
    </source>
</evidence>
<evidence type="ECO:0000303" key="24">
    <source>
    </source>
</evidence>
<evidence type="ECO:0000303" key="25">
    <source ref="10"/>
</evidence>
<evidence type="ECO:0000305" key="26"/>
<evidence type="ECO:0000312" key="27">
    <source>
        <dbReference type="HGNC" id="HGNC:3788"/>
    </source>
</evidence>
<evidence type="ECO:0007744" key="28">
    <source>
        <dbReference type="PDB" id="1Z8L"/>
    </source>
</evidence>
<evidence type="ECO:0007744" key="29">
    <source>
        <dbReference type="PDB" id="2C6C"/>
    </source>
</evidence>
<evidence type="ECO:0007744" key="30">
    <source>
        <dbReference type="PDB" id="2C6G"/>
    </source>
</evidence>
<evidence type="ECO:0007744" key="31">
    <source>
        <dbReference type="PDB" id="2C6P"/>
    </source>
</evidence>
<evidence type="ECO:0007744" key="32">
    <source>
        <dbReference type="PDB" id="2CIJ"/>
    </source>
</evidence>
<evidence type="ECO:0007744" key="33">
    <source>
        <dbReference type="PDB" id="2JBJ"/>
    </source>
</evidence>
<evidence type="ECO:0007744" key="34">
    <source>
        <dbReference type="PDB" id="2JBK"/>
    </source>
</evidence>
<evidence type="ECO:0007744" key="35">
    <source>
        <dbReference type="PDB" id="2OOT"/>
    </source>
</evidence>
<evidence type="ECO:0007744" key="36">
    <source>
        <dbReference type="PDB" id="2OR4"/>
    </source>
</evidence>
<evidence type="ECO:0007744" key="37">
    <source>
        <dbReference type="PDB" id="2PVV"/>
    </source>
</evidence>
<evidence type="ECO:0007744" key="38">
    <source>
        <dbReference type="PDB" id="2PVW"/>
    </source>
</evidence>
<evidence type="ECO:0007744" key="39">
    <source>
        <dbReference type="PDB" id="2XEF"/>
    </source>
</evidence>
<evidence type="ECO:0007744" key="40">
    <source>
        <dbReference type="PDB" id="2XEG"/>
    </source>
</evidence>
<evidence type="ECO:0007744" key="41">
    <source>
        <dbReference type="PDB" id="2XEI"/>
    </source>
</evidence>
<evidence type="ECO:0007744" key="42">
    <source>
        <dbReference type="PDB" id="2XEJ"/>
    </source>
</evidence>
<evidence type="ECO:0007744" key="43">
    <source>
        <dbReference type="PDB" id="3BHX"/>
    </source>
</evidence>
<evidence type="ECO:0007744" key="44">
    <source>
        <dbReference type="PDB" id="3BI0"/>
    </source>
</evidence>
<evidence type="ECO:0007744" key="45">
    <source>
        <dbReference type="PDB" id="3BI1"/>
    </source>
</evidence>
<evidence type="ECO:0007744" key="46">
    <source>
        <dbReference type="PDB" id="3BXM"/>
    </source>
</evidence>
<evidence type="ECO:0007744" key="47">
    <source>
        <dbReference type="PDB" id="3D7D"/>
    </source>
</evidence>
<evidence type="ECO:0007744" key="48">
    <source>
        <dbReference type="PDB" id="3D7F"/>
    </source>
</evidence>
<evidence type="ECO:0007744" key="49">
    <source>
        <dbReference type="PDB" id="3D7G"/>
    </source>
</evidence>
<evidence type="ECO:0007744" key="50">
    <source>
        <dbReference type="PDB" id="3D7H"/>
    </source>
</evidence>
<evidence type="ECO:0007744" key="51">
    <source>
        <dbReference type="PDB" id="3IWW"/>
    </source>
</evidence>
<evidence type="ECO:0007744" key="52">
    <source>
        <dbReference type="PDB" id="3RBU"/>
    </source>
</evidence>
<evidence type="ECO:0007744" key="53">
    <source>
        <dbReference type="PDB" id="3SJE"/>
    </source>
</evidence>
<evidence type="ECO:0007744" key="54">
    <source>
        <dbReference type="PDB" id="3SJF"/>
    </source>
</evidence>
<evidence type="ECO:0007744" key="55">
    <source>
        <dbReference type="PDB" id="3SJG"/>
    </source>
</evidence>
<evidence type="ECO:0007744" key="56">
    <source>
        <dbReference type="PDB" id="3SJX"/>
    </source>
</evidence>
<evidence type="ECO:0007744" key="57">
    <source>
        <dbReference type="PDB" id="4JYW"/>
    </source>
</evidence>
<evidence type="ECO:0007744" key="58">
    <source>
        <dbReference type="PDB" id="4JZ0"/>
    </source>
</evidence>
<evidence type="ECO:0007744" key="59">
    <source>
        <dbReference type="PDB" id="4LQG"/>
    </source>
</evidence>
<evidence type="ECO:0007744" key="60">
    <source>
        <dbReference type="PDB" id="4MCP"/>
    </source>
</evidence>
<evidence type="ECO:0007744" key="61">
    <source>
        <dbReference type="PDB" id="4MCQ"/>
    </source>
</evidence>
<evidence type="ECO:0007744" key="62">
    <source>
        <dbReference type="PDB" id="4MCR"/>
    </source>
</evidence>
<evidence type="ECO:0007744" key="63">
    <source>
        <dbReference type="PDB" id="4MCS"/>
    </source>
</evidence>
<evidence type="ECO:0007744" key="64">
    <source>
        <dbReference type="PDB" id="4NGM"/>
    </source>
</evidence>
<evidence type="ECO:0007744" key="65">
    <source>
        <dbReference type="PDB" id="4NGN"/>
    </source>
</evidence>
<evidence type="ECO:0007744" key="66">
    <source>
        <dbReference type="PDB" id="4NGP"/>
    </source>
</evidence>
<evidence type="ECO:0007744" key="67">
    <source>
        <dbReference type="PDB" id="4NGQ"/>
    </source>
</evidence>
<evidence type="ECO:0007744" key="68">
    <source>
        <dbReference type="PDB" id="4NGR"/>
    </source>
</evidence>
<evidence type="ECO:0007744" key="69">
    <source>
        <dbReference type="PDB" id="4NGS"/>
    </source>
</evidence>
<evidence type="ECO:0007744" key="70">
    <source>
        <dbReference type="PDB" id="4NGT"/>
    </source>
</evidence>
<evidence type="ECO:0007744" key="71">
    <source>
        <dbReference type="PDB" id="4OC0"/>
    </source>
</evidence>
<evidence type="ECO:0007744" key="72">
    <source>
        <dbReference type="PDB" id="4OC1"/>
    </source>
</evidence>
<evidence type="ECO:0007744" key="73">
    <source>
        <dbReference type="PDB" id="4OC2"/>
    </source>
</evidence>
<evidence type="ECO:0007744" key="74">
    <source>
        <dbReference type="PDB" id="4OC3"/>
    </source>
</evidence>
<evidence type="ECO:0007744" key="75">
    <source>
        <dbReference type="PDB" id="4OC4"/>
    </source>
</evidence>
<evidence type="ECO:0007744" key="76">
    <source>
        <dbReference type="PDB" id="4OC5"/>
    </source>
</evidence>
<evidence type="ECO:0007744" key="77">
    <source>
        <dbReference type="PDB" id="4OME"/>
    </source>
</evidence>
<evidence type="ECO:0007744" key="78">
    <source>
        <dbReference type="PDB" id="4P44"/>
    </source>
</evidence>
<evidence type="ECO:0007744" key="79">
    <source>
        <dbReference type="PDB" id="4P45"/>
    </source>
</evidence>
<evidence type="ECO:0007744" key="80">
    <source>
        <dbReference type="PDB" id="4P4B"/>
    </source>
</evidence>
<evidence type="ECO:0007744" key="81">
    <source>
        <dbReference type="PDB" id="4P4D"/>
    </source>
</evidence>
<evidence type="ECO:0007744" key="82">
    <source>
        <dbReference type="PDB" id="4P4E"/>
    </source>
</evidence>
<evidence type="ECO:0007744" key="83">
    <source>
        <dbReference type="PDB" id="4P4F"/>
    </source>
</evidence>
<evidence type="ECO:0007744" key="84">
    <source>
        <dbReference type="PDB" id="4P4I"/>
    </source>
</evidence>
<evidence type="ECO:0007744" key="85">
    <source>
        <dbReference type="PDB" id="4P4J"/>
    </source>
</evidence>
<evidence type="ECO:0007829" key="86">
    <source>
        <dbReference type="PDB" id="1Z8L"/>
    </source>
</evidence>
<evidence type="ECO:0007829" key="87">
    <source>
        <dbReference type="PDB" id="2C6G"/>
    </source>
</evidence>
<evidence type="ECO:0007829" key="88">
    <source>
        <dbReference type="PDB" id="2JBK"/>
    </source>
</evidence>
<evidence type="ECO:0007829" key="89">
    <source>
        <dbReference type="PDB" id="3D7H"/>
    </source>
</evidence>
<evidence type="ECO:0007829" key="90">
    <source>
        <dbReference type="PDB" id="3IWW"/>
    </source>
</evidence>
<evidence type="ECO:0007829" key="91">
    <source>
        <dbReference type="PDB" id="4NGP"/>
    </source>
</evidence>
<evidence type="ECO:0007829" key="92">
    <source>
        <dbReference type="PDB" id="5O5T"/>
    </source>
</evidence>
<accession>Q04609</accession>
<accession>A4UU12</accession>
<accession>A9CB79</accession>
<accession>B7Z312</accession>
<accession>B7Z343</accession>
<accession>D3DQS5</accession>
<accession>E9PDX8</accession>
<accession>O43748</accession>
<accession>Q16305</accession>
<accession>Q541A4</accession>
<accession>Q8TAY3</accession>
<accession>Q9NP15</accession>
<accession>Q9NYE2</accession>
<accession>Q9P1P8</accession>
<sequence length="750" mass="84331">MWNLLHETDSAVATARRPRWLCAGALVLAGGFFLLGFLFGWFIKSSNEATNITPKHNMKAFLDELKAENIKKFLYNFTQIPHLAGTEQNFQLAKQIQSQWKEFGLDSVELAHYDVLLSYPNKTHPNYISIINEDGNEIFNTSLFEPPPPGYENVSDIVPPFSAFSPQGMPEGDLVYVNYARTEDFFKLERDMKINCSGKIVIARYGKVFRGNKVKNAQLAGAKGVILYSDPADYFAPGVKSYPDGWNLPGGGVQRGNILNLNGAGDPLTPGYPANEYAYRRGIAEAVGLPSIPVHPIGYYDAQKLLEKMGGSAPPDSSWRGSLKVPYNVGPGFTGNFSTQKVKMHIHSTNEVTRIYNVIGTLRGAVEPDRYVILGGHRDSWVFGGIDPQSGAAVVHEIVRSFGTLKKEGWRPRRTILFASWDAEEFGLLGSTEWAEENSRLLQERGVAYINADSSIEGNYTLRVDCTPLMYSLVHNLTKELKSPDEGFEGKSLYESWTKKSPSPEFSGMPRISKLGSGNDFEVFFQRLGIASGRARYTKNWETNKFSGYPLYHSVYETYELVEKFYDPMFKYHLTVAQVRGGMVFELANSIVLPFDCRDYAVVLRKYADKIYSISMKHPQEMKTYSVSFDSLFSAVKNFTEIASKFSERLQDFDKSNPIVLRMMNDQLMFLERAFIDPLGLPDRPFYRHVIYAPSSHNKYAGESFPGIYDALFDIESKVDPSKAWGEVKRQIYVAAFTVQAAAETLSEVA</sequence>
<keyword id="KW-0002">3D-structure</keyword>
<keyword id="KW-0025">Alternative splicing</keyword>
<keyword id="KW-0106">Calcium</keyword>
<keyword id="KW-0121">Carboxypeptidase</keyword>
<keyword id="KW-1003">Cell membrane</keyword>
<keyword id="KW-0963">Cytoplasm</keyword>
<keyword id="KW-0224">Dipeptidase</keyword>
<keyword id="KW-0903">Direct protein sequencing</keyword>
<keyword id="KW-0325">Glycoprotein</keyword>
<keyword id="KW-0378">Hydrolase</keyword>
<keyword id="KW-0472">Membrane</keyword>
<keyword id="KW-0479">Metal-binding</keyword>
<keyword id="KW-0482">Metalloprotease</keyword>
<keyword id="KW-0511">Multifunctional enzyme</keyword>
<keyword id="KW-0597">Phosphoprotein</keyword>
<keyword id="KW-0645">Protease</keyword>
<keyword id="KW-1267">Proteomics identification</keyword>
<keyword id="KW-1185">Reference proteome</keyword>
<keyword id="KW-0735">Signal-anchor</keyword>
<keyword id="KW-0812">Transmembrane</keyword>
<keyword id="KW-1133">Transmembrane helix</keyword>
<keyword id="KW-0862">Zinc</keyword>
<gene>
    <name evidence="27" type="primary">FOLH1</name>
    <name type="synonym">FOLH</name>
    <name type="synonym">NAALAD1</name>
    <name type="synonym">PSM</name>
    <name type="synonym">PSMA</name>
    <name type="ORF">GIG27</name>
</gene>
<dbReference type="EC" id="3.4.17.21"/>
<dbReference type="EMBL" id="M99487">
    <property type="protein sequence ID" value="AAA60209.1"/>
    <property type="molecule type" value="mRNA"/>
</dbReference>
<dbReference type="EMBL" id="S76978">
    <property type="protein sequence ID" value="AAB33750.2"/>
    <property type="molecule type" value="mRNA"/>
</dbReference>
<dbReference type="EMBL" id="AF007544">
    <property type="protein sequence ID" value="AAC83972.1"/>
    <property type="molecule type" value="Genomic_DNA"/>
</dbReference>
<dbReference type="EMBL" id="AF176574">
    <property type="protein sequence ID" value="AAD51121.1"/>
    <property type="molecule type" value="mRNA"/>
</dbReference>
<dbReference type="EMBL" id="EF488811">
    <property type="protein sequence ID" value="ABO93402.2"/>
    <property type="molecule type" value="mRNA"/>
</dbReference>
<dbReference type="EMBL" id="AY101595">
    <property type="protein sequence ID" value="AAM34479.1"/>
    <property type="molecule type" value="mRNA"/>
</dbReference>
<dbReference type="EMBL" id="AF107214">
    <property type="protein sequence ID" value="AAF31167.1"/>
    <property type="status" value="ALT_SEQ"/>
    <property type="molecule type" value="Genomic_DNA"/>
</dbReference>
<dbReference type="EMBL" id="DQ088979">
    <property type="protein sequence ID" value="AAZ66619.1"/>
    <property type="molecule type" value="mRNA"/>
</dbReference>
<dbReference type="EMBL" id="AK312366">
    <property type="protein sequence ID" value="BAG35284.1"/>
    <property type="molecule type" value="mRNA"/>
</dbReference>
<dbReference type="EMBL" id="AK295368">
    <property type="protein sequence ID" value="BAH12048.1"/>
    <property type="molecule type" value="mRNA"/>
</dbReference>
<dbReference type="EMBL" id="AK295470">
    <property type="protein sequence ID" value="BAH12079.1"/>
    <property type="molecule type" value="mRNA"/>
</dbReference>
<dbReference type="EMBL" id="AC110742">
    <property type="status" value="NOT_ANNOTATED_CDS"/>
    <property type="molecule type" value="Genomic_DNA"/>
</dbReference>
<dbReference type="EMBL" id="AC118273">
    <property type="status" value="NOT_ANNOTATED_CDS"/>
    <property type="molecule type" value="Genomic_DNA"/>
</dbReference>
<dbReference type="EMBL" id="CH471064">
    <property type="protein sequence ID" value="EAW67858.1"/>
    <property type="molecule type" value="Genomic_DNA"/>
</dbReference>
<dbReference type="EMBL" id="CH471064">
    <property type="protein sequence ID" value="EAW67861.1"/>
    <property type="molecule type" value="Genomic_DNA"/>
</dbReference>
<dbReference type="EMBL" id="CH471064">
    <property type="protein sequence ID" value="EAW67857.1"/>
    <property type="molecule type" value="Genomic_DNA"/>
</dbReference>
<dbReference type="EMBL" id="CH471064">
    <property type="protein sequence ID" value="EAW67859.1"/>
    <property type="molecule type" value="Genomic_DNA"/>
</dbReference>
<dbReference type="EMBL" id="BC025672">
    <property type="protein sequence ID" value="AAH25672.1"/>
    <property type="molecule type" value="mRNA"/>
</dbReference>
<dbReference type="EMBL" id="AF254357">
    <property type="protein sequence ID" value="AAF71357.1"/>
    <property type="molecule type" value="mRNA"/>
</dbReference>
<dbReference type="EMBL" id="AF254358">
    <property type="protein sequence ID" value="AAF71358.1"/>
    <property type="molecule type" value="mRNA"/>
</dbReference>
<dbReference type="CCDS" id="CCDS31493.1">
    <molecule id="Q04609-8"/>
</dbReference>
<dbReference type="CCDS" id="CCDS53627.1">
    <molecule id="Q04609-9"/>
</dbReference>
<dbReference type="CCDS" id="CCDS53628.1">
    <molecule id="Q04609-7"/>
</dbReference>
<dbReference type="CCDS" id="CCDS7946.1">
    <molecule id="Q04609-1"/>
</dbReference>
<dbReference type="PIR" id="A56881">
    <property type="entry name" value="A56881"/>
</dbReference>
<dbReference type="RefSeq" id="NP_001014986.1">
    <molecule id="Q04609-8"/>
    <property type="nucleotide sequence ID" value="NM_001014986.3"/>
</dbReference>
<dbReference type="RefSeq" id="NP_001180400.1">
    <molecule id="Q04609-7"/>
    <property type="nucleotide sequence ID" value="NM_001193471.3"/>
</dbReference>
<dbReference type="RefSeq" id="NP_001180401.1">
    <molecule id="Q04609-9"/>
    <property type="nucleotide sequence ID" value="NM_001193472.3"/>
</dbReference>
<dbReference type="RefSeq" id="NP_001180402.1">
    <molecule id="Q04609-10"/>
    <property type="nucleotide sequence ID" value="NM_001193473.3"/>
</dbReference>
<dbReference type="RefSeq" id="NP_004467.1">
    <molecule id="Q04609-1"/>
    <property type="nucleotide sequence ID" value="NM_004476.3"/>
</dbReference>
<dbReference type="RefSeq" id="XP_016872923.1">
    <molecule id="Q04609-7"/>
    <property type="nucleotide sequence ID" value="XM_017017434.2"/>
</dbReference>
<dbReference type="RefSeq" id="XP_016872924.1">
    <property type="nucleotide sequence ID" value="XM_017017435.1"/>
</dbReference>
<dbReference type="RefSeq" id="XP_016872925.1">
    <property type="nucleotide sequence ID" value="XM_017017436.1"/>
</dbReference>
<dbReference type="RefSeq" id="XP_016872926.1">
    <property type="nucleotide sequence ID" value="XM_017017437.1"/>
</dbReference>
<dbReference type="RefSeq" id="XP_016872931.1">
    <property type="nucleotide sequence ID" value="XM_017017442.1"/>
</dbReference>
<dbReference type="RefSeq" id="XP_016872932.1">
    <property type="nucleotide sequence ID" value="XM_017017443.1"/>
</dbReference>
<dbReference type="RefSeq" id="XP_016872933.1">
    <property type="nucleotide sequence ID" value="XM_017017444.1"/>
</dbReference>
<dbReference type="RefSeq" id="XP_016872934.1">
    <property type="nucleotide sequence ID" value="XM_017017445.1"/>
</dbReference>
<dbReference type="RefSeq" id="XP_016872935.1">
    <property type="nucleotide sequence ID" value="XM_017017446.1"/>
</dbReference>
<dbReference type="RefSeq" id="XP_016872936.1">
    <property type="nucleotide sequence ID" value="XM_017017447.1"/>
</dbReference>
<dbReference type="RefSeq" id="XP_016872937.1">
    <property type="nucleotide sequence ID" value="XM_017017448.1"/>
</dbReference>
<dbReference type="RefSeq" id="XP_047282634.1">
    <molecule id="Q04609-6"/>
    <property type="nucleotide sequence ID" value="XM_047426678.1"/>
</dbReference>
<dbReference type="RefSeq" id="XP_047282635.1">
    <molecule id="Q04609-6"/>
    <property type="nucleotide sequence ID" value="XM_047426679.1"/>
</dbReference>
<dbReference type="RefSeq" id="XP_047282636.1">
    <molecule id="Q04609-6"/>
    <property type="nucleotide sequence ID" value="XM_047426680.1"/>
</dbReference>
<dbReference type="PDB" id="1Z8L">
    <property type="method" value="X-ray"/>
    <property type="resolution" value="3.50 A"/>
    <property type="chains" value="A/B/C/D=56-750"/>
</dbReference>
<dbReference type="PDB" id="2C6C">
    <property type="method" value="X-ray"/>
    <property type="resolution" value="2.00 A"/>
    <property type="chains" value="A=44-750"/>
</dbReference>
<dbReference type="PDB" id="2C6G">
    <property type="method" value="X-ray"/>
    <property type="resolution" value="2.20 A"/>
    <property type="chains" value="A=44-750"/>
</dbReference>
<dbReference type="PDB" id="2C6P">
    <property type="method" value="X-ray"/>
    <property type="resolution" value="2.39 A"/>
    <property type="chains" value="A=44-750"/>
</dbReference>
<dbReference type="PDB" id="2CIJ">
    <property type="method" value="X-ray"/>
    <property type="resolution" value="2.40 A"/>
    <property type="chains" value="A=44-750"/>
</dbReference>
<dbReference type="PDB" id="2JBJ">
    <property type="method" value="X-ray"/>
    <property type="resolution" value="2.19 A"/>
    <property type="chains" value="A=44-750"/>
</dbReference>
<dbReference type="PDB" id="2JBK">
    <property type="method" value="X-ray"/>
    <property type="resolution" value="2.99 A"/>
    <property type="chains" value="A=44-750"/>
</dbReference>
<dbReference type="PDB" id="2OOT">
    <property type="method" value="X-ray"/>
    <property type="resolution" value="1.64 A"/>
    <property type="chains" value="A=44-750"/>
</dbReference>
<dbReference type="PDB" id="2OR4">
    <property type="method" value="X-ray"/>
    <property type="resolution" value="1.62 A"/>
    <property type="chains" value="A=44-750"/>
</dbReference>
<dbReference type="PDB" id="2PVV">
    <property type="method" value="X-ray"/>
    <property type="resolution" value="2.11 A"/>
    <property type="chains" value="A=44-750"/>
</dbReference>
<dbReference type="PDB" id="2PVW">
    <property type="method" value="X-ray"/>
    <property type="resolution" value="1.71 A"/>
    <property type="chains" value="A=44-750"/>
</dbReference>
<dbReference type="PDB" id="2XEF">
    <property type="method" value="X-ray"/>
    <property type="resolution" value="1.59 A"/>
    <property type="chains" value="A=44-750"/>
</dbReference>
<dbReference type="PDB" id="2XEG">
    <property type="method" value="X-ray"/>
    <property type="resolution" value="1.59 A"/>
    <property type="chains" value="A=44-750"/>
</dbReference>
<dbReference type="PDB" id="2XEI">
    <property type="method" value="X-ray"/>
    <property type="resolution" value="1.69 A"/>
    <property type="chains" value="A=44-750"/>
</dbReference>
<dbReference type="PDB" id="2XEJ">
    <property type="method" value="X-ray"/>
    <property type="resolution" value="1.78 A"/>
    <property type="chains" value="A=44-750"/>
</dbReference>
<dbReference type="PDB" id="3BHX">
    <property type="method" value="X-ray"/>
    <property type="resolution" value="1.60 A"/>
    <property type="chains" value="A=44-750"/>
</dbReference>
<dbReference type="PDB" id="3BI0">
    <property type="method" value="X-ray"/>
    <property type="resolution" value="1.67 A"/>
    <property type="chains" value="A=44-750"/>
</dbReference>
<dbReference type="PDB" id="3BI1">
    <property type="method" value="X-ray"/>
    <property type="resolution" value="1.50 A"/>
    <property type="chains" value="A=44-750"/>
</dbReference>
<dbReference type="PDB" id="3BXM">
    <property type="method" value="X-ray"/>
    <property type="resolution" value="1.71 A"/>
    <property type="chains" value="A=44-750"/>
</dbReference>
<dbReference type="PDB" id="3D7D">
    <property type="method" value="X-ray"/>
    <property type="resolution" value="1.69 A"/>
    <property type="chains" value="A=44-750"/>
</dbReference>
<dbReference type="PDB" id="3D7F">
    <property type="method" value="X-ray"/>
    <property type="resolution" value="1.54 A"/>
    <property type="chains" value="A=44-750"/>
</dbReference>
<dbReference type="PDB" id="3D7G">
    <property type="method" value="X-ray"/>
    <property type="resolution" value="1.75 A"/>
    <property type="chains" value="A=44-750"/>
</dbReference>
<dbReference type="PDB" id="3D7H">
    <property type="method" value="X-ray"/>
    <property type="resolution" value="1.55 A"/>
    <property type="chains" value="A=44-750"/>
</dbReference>
<dbReference type="PDB" id="3IWW">
    <property type="method" value="X-ray"/>
    <property type="resolution" value="2.30 A"/>
    <property type="chains" value="A=44-750"/>
</dbReference>
<dbReference type="PDB" id="3RBU">
    <property type="method" value="X-ray"/>
    <property type="resolution" value="1.60 A"/>
    <property type="chains" value="A=44-750"/>
</dbReference>
<dbReference type="PDB" id="3SJE">
    <property type="method" value="X-ray"/>
    <property type="resolution" value="1.70 A"/>
    <property type="chains" value="A=44-750"/>
</dbReference>
<dbReference type="PDB" id="3SJF">
    <property type="method" value="X-ray"/>
    <property type="resolution" value="1.65 A"/>
    <property type="chains" value="A=44-750"/>
</dbReference>
<dbReference type="PDB" id="3SJG">
    <property type="method" value="X-ray"/>
    <property type="resolution" value="1.65 A"/>
    <property type="chains" value="A=44-750"/>
</dbReference>
<dbReference type="PDB" id="3SJX">
    <property type="method" value="X-ray"/>
    <property type="resolution" value="1.66 A"/>
    <property type="chains" value="A=44-750"/>
</dbReference>
<dbReference type="PDB" id="4JYW">
    <property type="method" value="X-ray"/>
    <property type="resolution" value="1.73 A"/>
    <property type="chains" value="A=44-750"/>
</dbReference>
<dbReference type="PDB" id="4JZ0">
    <property type="method" value="X-ray"/>
    <property type="resolution" value="1.83 A"/>
    <property type="chains" value="A=44-750"/>
</dbReference>
<dbReference type="PDB" id="4LQG">
    <property type="method" value="X-ray"/>
    <property type="resolution" value="1.77 A"/>
    <property type="chains" value="A=44-750"/>
</dbReference>
<dbReference type="PDB" id="4MCP">
    <property type="method" value="X-ray"/>
    <property type="resolution" value="1.65 A"/>
    <property type="chains" value="A=44-750"/>
</dbReference>
<dbReference type="PDB" id="4MCQ">
    <property type="method" value="X-ray"/>
    <property type="resolution" value="2.00 A"/>
    <property type="chains" value="A=44-750"/>
</dbReference>
<dbReference type="PDB" id="4MCR">
    <property type="method" value="X-ray"/>
    <property type="resolution" value="1.65 A"/>
    <property type="chains" value="A=44-750"/>
</dbReference>
<dbReference type="PDB" id="4MCS">
    <property type="method" value="X-ray"/>
    <property type="resolution" value="1.83 A"/>
    <property type="chains" value="A=44-750"/>
</dbReference>
<dbReference type="PDB" id="4NGM">
    <property type="method" value="X-ray"/>
    <property type="resolution" value="1.84 A"/>
    <property type="chains" value="A=44-750"/>
</dbReference>
<dbReference type="PDB" id="4NGN">
    <property type="method" value="X-ray"/>
    <property type="resolution" value="1.64 A"/>
    <property type="chains" value="A=44-750"/>
</dbReference>
<dbReference type="PDB" id="4NGP">
    <property type="method" value="X-ray"/>
    <property type="resolution" value="1.63 A"/>
    <property type="chains" value="A=44-750"/>
</dbReference>
<dbReference type="PDB" id="4NGQ">
    <property type="method" value="X-ray"/>
    <property type="resolution" value="2.08 A"/>
    <property type="chains" value="A=44-750"/>
</dbReference>
<dbReference type="PDB" id="4NGR">
    <property type="method" value="X-ray"/>
    <property type="resolution" value="1.90 A"/>
    <property type="chains" value="A=44-750"/>
</dbReference>
<dbReference type="PDB" id="4NGS">
    <property type="method" value="X-ray"/>
    <property type="resolution" value="1.68 A"/>
    <property type="chains" value="A=44-750"/>
</dbReference>
<dbReference type="PDB" id="4NGT">
    <property type="method" value="X-ray"/>
    <property type="resolution" value="2.31 A"/>
    <property type="chains" value="A=44-750"/>
</dbReference>
<dbReference type="PDB" id="4OC0">
    <property type="method" value="X-ray"/>
    <property type="resolution" value="1.85 A"/>
    <property type="chains" value="A=44-750"/>
</dbReference>
<dbReference type="PDB" id="4OC1">
    <property type="method" value="X-ray"/>
    <property type="resolution" value="1.75 A"/>
    <property type="chains" value="A=44-750"/>
</dbReference>
<dbReference type="PDB" id="4OC2">
    <property type="method" value="X-ray"/>
    <property type="resolution" value="1.65 A"/>
    <property type="chains" value="A=44-750"/>
</dbReference>
<dbReference type="PDB" id="4OC3">
    <property type="method" value="X-ray"/>
    <property type="resolution" value="1.79 A"/>
    <property type="chains" value="A=44-750"/>
</dbReference>
<dbReference type="PDB" id="4OC4">
    <property type="method" value="X-ray"/>
    <property type="resolution" value="1.66 A"/>
    <property type="chains" value="A=44-750"/>
</dbReference>
<dbReference type="PDB" id="4OC5">
    <property type="method" value="X-ray"/>
    <property type="resolution" value="1.70 A"/>
    <property type="chains" value="A=44-750"/>
</dbReference>
<dbReference type="PDB" id="4OME">
    <property type="method" value="X-ray"/>
    <property type="resolution" value="1.79 A"/>
    <property type="chains" value="A=44-750"/>
</dbReference>
<dbReference type="PDB" id="4P44">
    <property type="method" value="X-ray"/>
    <property type="resolution" value="1.75 A"/>
    <property type="chains" value="A=44-750"/>
</dbReference>
<dbReference type="PDB" id="4P45">
    <property type="method" value="X-ray"/>
    <property type="resolution" value="1.87 A"/>
    <property type="chains" value="A=44-750"/>
</dbReference>
<dbReference type="PDB" id="4P4B">
    <property type="method" value="X-ray"/>
    <property type="resolution" value="1.93 A"/>
    <property type="chains" value="A=44-750"/>
</dbReference>
<dbReference type="PDB" id="4P4D">
    <property type="method" value="X-ray"/>
    <property type="resolution" value="1.65 A"/>
    <property type="chains" value="A=44-750"/>
</dbReference>
<dbReference type="PDB" id="4P4E">
    <property type="method" value="X-ray"/>
    <property type="resolution" value="1.67 A"/>
    <property type="chains" value="A=44-750"/>
</dbReference>
<dbReference type="PDB" id="4P4F">
    <property type="method" value="X-ray"/>
    <property type="resolution" value="1.86 A"/>
    <property type="chains" value="A=44-750"/>
</dbReference>
<dbReference type="PDB" id="4P4I">
    <property type="method" value="X-ray"/>
    <property type="resolution" value="1.87 A"/>
    <property type="chains" value="A=44-750"/>
</dbReference>
<dbReference type="PDB" id="4P4J">
    <property type="method" value="X-ray"/>
    <property type="resolution" value="1.66 A"/>
    <property type="chains" value="A=44-750"/>
</dbReference>
<dbReference type="PDB" id="4W9Y">
    <property type="method" value="X-ray"/>
    <property type="resolution" value="1.64 A"/>
    <property type="chains" value="A=44-750"/>
</dbReference>
<dbReference type="PDB" id="4X3R">
    <property type="method" value="X-ray"/>
    <property type="resolution" value="1.86 A"/>
    <property type="chains" value="A=44-750"/>
</dbReference>
<dbReference type="PDB" id="5D29">
    <property type="method" value="X-ray"/>
    <property type="resolution" value="1.80 A"/>
    <property type="chains" value="A=56-750"/>
</dbReference>
<dbReference type="PDB" id="5ELY">
    <property type="method" value="X-ray"/>
    <property type="resolution" value="1.81 A"/>
    <property type="chains" value="A=55-750"/>
</dbReference>
<dbReference type="PDB" id="5F09">
    <property type="method" value="X-ray"/>
    <property type="resolution" value="1.85 A"/>
    <property type="chains" value="A=44-750"/>
</dbReference>
<dbReference type="PDB" id="5O5R">
    <property type="method" value="X-ray"/>
    <property type="resolution" value="1.65 A"/>
    <property type="chains" value="A=44-750"/>
</dbReference>
<dbReference type="PDB" id="5O5T">
    <property type="method" value="X-ray"/>
    <property type="resolution" value="1.43 A"/>
    <property type="chains" value="A=44-750"/>
</dbReference>
<dbReference type="PDB" id="5O5U">
    <property type="method" value="X-ray"/>
    <property type="resolution" value="1.53 A"/>
    <property type="chains" value="A=44-750"/>
</dbReference>
<dbReference type="PDB" id="5OF0">
    <property type="method" value="X-ray"/>
    <property type="resolution" value="1.48 A"/>
    <property type="chains" value="A=44-750"/>
</dbReference>
<dbReference type="PDB" id="6ETY">
    <property type="method" value="X-ray"/>
    <property type="resolution" value="1.68 A"/>
    <property type="chains" value="A=44-750"/>
</dbReference>
<dbReference type="PDB" id="6EZ9">
    <property type="method" value="X-ray"/>
    <property type="resolution" value="1.61 A"/>
    <property type="chains" value="A=44-750"/>
</dbReference>
<dbReference type="PDB" id="6F5L">
    <property type="method" value="X-ray"/>
    <property type="resolution" value="1.63 A"/>
    <property type="chains" value="A=44-750"/>
</dbReference>
<dbReference type="PDB" id="6FE5">
    <property type="method" value="X-ray"/>
    <property type="resolution" value="1.52 A"/>
    <property type="chains" value="A=44-750"/>
</dbReference>
<dbReference type="PDB" id="6H7Y">
    <property type="method" value="X-ray"/>
    <property type="resolution" value="1.81 A"/>
    <property type="chains" value="A=44-750"/>
</dbReference>
<dbReference type="PDB" id="6H7Z">
    <property type="method" value="X-ray"/>
    <property type="resolution" value="2.00 A"/>
    <property type="chains" value="A=44-750"/>
</dbReference>
<dbReference type="PDB" id="6HKJ">
    <property type="method" value="X-ray"/>
    <property type="resolution" value="2.09 A"/>
    <property type="chains" value="A=44-750"/>
</dbReference>
<dbReference type="PDB" id="6HKZ">
    <property type="method" value="X-ray"/>
    <property type="resolution" value="2.09 A"/>
    <property type="chains" value="A=44-750"/>
</dbReference>
<dbReference type="PDB" id="6RBC">
    <property type="method" value="X-ray"/>
    <property type="resolution" value="1.77 A"/>
    <property type="chains" value="A=44-750"/>
</dbReference>
<dbReference type="PDB" id="6RTI">
    <property type="method" value="X-ray"/>
    <property type="resolution" value="2.20 A"/>
    <property type="chains" value="A=44-750"/>
</dbReference>
<dbReference type="PDB" id="6S1X">
    <property type="method" value="X-ray"/>
    <property type="resolution" value="1.76 A"/>
    <property type="chains" value="A=44-750"/>
</dbReference>
<dbReference type="PDB" id="6SGP">
    <property type="method" value="X-ray"/>
    <property type="resolution" value="1.58 A"/>
    <property type="chains" value="A=44-750"/>
</dbReference>
<dbReference type="PDB" id="6SKH">
    <property type="method" value="X-ray"/>
    <property type="resolution" value="1.58 A"/>
    <property type="chains" value="A=44-750"/>
</dbReference>
<dbReference type="PDB" id="7BFZ">
    <property type="method" value="X-ray"/>
    <property type="resolution" value="1.73 A"/>
    <property type="chains" value="A=44-750"/>
</dbReference>
<dbReference type="PDB" id="8BO8">
    <property type="method" value="X-ray"/>
    <property type="resolution" value="1.55 A"/>
    <property type="chains" value="A=44-750"/>
</dbReference>
<dbReference type="PDB" id="8BOL">
    <property type="method" value="X-ray"/>
    <property type="resolution" value="1.55 A"/>
    <property type="chains" value="A=44-750"/>
</dbReference>
<dbReference type="PDB" id="8BOW">
    <property type="method" value="X-ray"/>
    <property type="resolution" value="1.58 A"/>
    <property type="chains" value="A=44-750"/>
</dbReference>
<dbReference type="PDBsum" id="1Z8L"/>
<dbReference type="PDBsum" id="2C6C"/>
<dbReference type="PDBsum" id="2C6G"/>
<dbReference type="PDBsum" id="2C6P"/>
<dbReference type="PDBsum" id="2CIJ"/>
<dbReference type="PDBsum" id="2JBJ"/>
<dbReference type="PDBsum" id="2JBK"/>
<dbReference type="PDBsum" id="2OOT"/>
<dbReference type="PDBsum" id="2OR4"/>
<dbReference type="PDBsum" id="2PVV"/>
<dbReference type="PDBsum" id="2PVW"/>
<dbReference type="PDBsum" id="2XEF"/>
<dbReference type="PDBsum" id="2XEG"/>
<dbReference type="PDBsum" id="2XEI"/>
<dbReference type="PDBsum" id="2XEJ"/>
<dbReference type="PDBsum" id="3BHX"/>
<dbReference type="PDBsum" id="3BI0"/>
<dbReference type="PDBsum" id="3BI1"/>
<dbReference type="PDBsum" id="3BXM"/>
<dbReference type="PDBsum" id="3D7D"/>
<dbReference type="PDBsum" id="3D7F"/>
<dbReference type="PDBsum" id="3D7G"/>
<dbReference type="PDBsum" id="3D7H"/>
<dbReference type="PDBsum" id="3IWW"/>
<dbReference type="PDBsum" id="3RBU"/>
<dbReference type="PDBsum" id="3SJE"/>
<dbReference type="PDBsum" id="3SJF"/>
<dbReference type="PDBsum" id="3SJG"/>
<dbReference type="PDBsum" id="3SJX"/>
<dbReference type="PDBsum" id="4JYW"/>
<dbReference type="PDBsum" id="4JZ0"/>
<dbReference type="PDBsum" id="4LQG"/>
<dbReference type="PDBsum" id="4MCP"/>
<dbReference type="PDBsum" id="4MCQ"/>
<dbReference type="PDBsum" id="4MCR"/>
<dbReference type="PDBsum" id="4MCS"/>
<dbReference type="PDBsum" id="4NGM"/>
<dbReference type="PDBsum" id="4NGN"/>
<dbReference type="PDBsum" id="4NGP"/>
<dbReference type="PDBsum" id="4NGQ"/>
<dbReference type="PDBsum" id="4NGR"/>
<dbReference type="PDBsum" id="4NGS"/>
<dbReference type="PDBsum" id="4NGT"/>
<dbReference type="PDBsum" id="4OC0"/>
<dbReference type="PDBsum" id="4OC1"/>
<dbReference type="PDBsum" id="4OC2"/>
<dbReference type="PDBsum" id="4OC3"/>
<dbReference type="PDBsum" id="4OC4"/>
<dbReference type="PDBsum" id="4OC5"/>
<dbReference type="PDBsum" id="4OME"/>
<dbReference type="PDBsum" id="4P44"/>
<dbReference type="PDBsum" id="4P45"/>
<dbReference type="PDBsum" id="4P4B"/>
<dbReference type="PDBsum" id="4P4D"/>
<dbReference type="PDBsum" id="4P4E"/>
<dbReference type="PDBsum" id="4P4F"/>
<dbReference type="PDBsum" id="4P4I"/>
<dbReference type="PDBsum" id="4P4J"/>
<dbReference type="PDBsum" id="4W9Y"/>
<dbReference type="PDBsum" id="4X3R"/>
<dbReference type="PDBsum" id="5D29"/>
<dbReference type="PDBsum" id="5ELY"/>
<dbReference type="PDBsum" id="5F09"/>
<dbReference type="PDBsum" id="5O5R"/>
<dbReference type="PDBsum" id="5O5T"/>
<dbReference type="PDBsum" id="5O5U"/>
<dbReference type="PDBsum" id="5OF0"/>
<dbReference type="PDBsum" id="6ETY"/>
<dbReference type="PDBsum" id="6EZ9"/>
<dbReference type="PDBsum" id="6F5L"/>
<dbReference type="PDBsum" id="6FE5"/>
<dbReference type="PDBsum" id="6H7Y"/>
<dbReference type="PDBsum" id="6H7Z"/>
<dbReference type="PDBsum" id="6HKJ"/>
<dbReference type="PDBsum" id="6HKZ"/>
<dbReference type="PDBsum" id="6RBC"/>
<dbReference type="PDBsum" id="6RTI"/>
<dbReference type="PDBsum" id="6S1X"/>
<dbReference type="PDBsum" id="6SGP"/>
<dbReference type="PDBsum" id="6SKH"/>
<dbReference type="PDBsum" id="7BFZ"/>
<dbReference type="PDBsum" id="8BO8"/>
<dbReference type="PDBsum" id="8BOL"/>
<dbReference type="PDBsum" id="8BOW"/>
<dbReference type="SMR" id="Q04609"/>
<dbReference type="BioGRID" id="108630">
    <property type="interactions" value="23"/>
</dbReference>
<dbReference type="CORUM" id="Q04609"/>
<dbReference type="FunCoup" id="Q04609">
    <property type="interactions" value="160"/>
</dbReference>
<dbReference type="IntAct" id="Q04609">
    <property type="interactions" value="11"/>
</dbReference>
<dbReference type="MINT" id="Q04609"/>
<dbReference type="STRING" id="9606.ENSP00000256999"/>
<dbReference type="BindingDB" id="Q04609"/>
<dbReference type="ChEMBL" id="CHEMBL1892"/>
<dbReference type="DrugBank" id="DB06928">
    <property type="generic name" value="(2S)-2-{[HYDROXY(4-IODOBENZYL)PHOSPHORYL]METHYL}PENTANEDIOIC ACID"/>
</dbReference>
<dbReference type="DrugBank" id="DB00089">
    <property type="generic name" value="Capromab pendetide"/>
</dbReference>
<dbReference type="DrugBank" id="DB07754">
    <property type="generic name" value="DCFBC"/>
</dbReference>
<dbReference type="DrugBank" id="DB17851">
    <property type="generic name" value="Flotufolastat F-18"/>
</dbReference>
<dbReference type="DrugBank" id="DB16019">
    <property type="generic name" value="Gallium Ga-68 gozetotide"/>
</dbReference>
<dbReference type="DrugBank" id="DB00142">
    <property type="generic name" value="Glutamic acid"/>
</dbReference>
<dbReference type="DrugBank" id="DB12514">
    <property type="generic name" value="Iofolastat I-123"/>
</dbReference>
<dbReference type="DrugBank" id="DB11813">
    <property type="generic name" value="Mipsagargin"/>
</dbReference>
<dbReference type="DrugBank" id="DB14805">
    <property type="generic name" value="Piflufolastat F 18"/>
</dbReference>
<dbReference type="DrugBank" id="DB02999">
    <property type="generic name" value="Quisqualic acid"/>
</dbReference>
<dbReference type="DrugBank" id="DB08835">
    <property type="generic name" value="Spaglumic acid"/>
</dbReference>
<dbReference type="DrugCentral" id="Q04609"/>
<dbReference type="GuidetoPHARMACOLOGY" id="1606"/>
<dbReference type="MEROPS" id="M28.010"/>
<dbReference type="TCDB" id="9.B.229.1.8">
    <property type="family name" value="the transferrin receptor, cd71, (tfr) family"/>
</dbReference>
<dbReference type="GlyCosmos" id="Q04609">
    <property type="glycosylation" value="10 sites, No reported glycans"/>
</dbReference>
<dbReference type="GlyGen" id="Q04609">
    <property type="glycosylation" value="13 sites, 41 N-linked glycans (7 sites)"/>
</dbReference>
<dbReference type="iPTMnet" id="Q04609"/>
<dbReference type="PhosphoSitePlus" id="Q04609"/>
<dbReference type="SwissPalm" id="Q04609"/>
<dbReference type="BioMuta" id="FOLH1"/>
<dbReference type="DMDM" id="548615"/>
<dbReference type="CPTAC" id="CPTAC-1491"/>
<dbReference type="jPOST" id="Q04609"/>
<dbReference type="MassIVE" id="Q04609"/>
<dbReference type="PaxDb" id="9606-ENSP00000256999"/>
<dbReference type="PeptideAtlas" id="Q04609"/>
<dbReference type="ProteomicsDB" id="58243">
    <molecule id="Q04609-1"/>
</dbReference>
<dbReference type="ProteomicsDB" id="58244">
    <molecule id="Q04609-3"/>
</dbReference>
<dbReference type="ProteomicsDB" id="58245">
    <molecule id="Q04609-4"/>
</dbReference>
<dbReference type="ProteomicsDB" id="58246">
    <molecule id="Q04609-6"/>
</dbReference>
<dbReference type="ProteomicsDB" id="58247">
    <molecule id="Q04609-7"/>
</dbReference>
<dbReference type="ProteomicsDB" id="58248">
    <molecule id="Q04609-8"/>
</dbReference>
<dbReference type="ProteomicsDB" id="58249">
    <molecule id="Q04609-9"/>
</dbReference>
<dbReference type="ProteomicsDB" id="6482"/>
<dbReference type="ABCD" id="Q04609">
    <property type="antibodies" value="39 sequenced antibodies"/>
</dbReference>
<dbReference type="Antibodypedia" id="2262">
    <property type="antibodies" value="1434 antibodies from 41 providers"/>
</dbReference>
<dbReference type="DNASU" id="2346"/>
<dbReference type="Ensembl" id="ENST00000256999.7">
    <molecule id="Q04609-1"/>
    <property type="protein sequence ID" value="ENSP00000256999.2"/>
    <property type="gene ID" value="ENSG00000086205.18"/>
</dbReference>
<dbReference type="Ensembl" id="ENST00000340334.11">
    <molecule id="Q04609-7"/>
    <property type="protein sequence ID" value="ENSP00000344131.7"/>
    <property type="gene ID" value="ENSG00000086205.18"/>
</dbReference>
<dbReference type="Ensembl" id="ENST00000356696.7">
    <molecule id="Q04609-8"/>
    <property type="protein sequence ID" value="ENSP00000349129.3"/>
    <property type="gene ID" value="ENSG00000086205.18"/>
</dbReference>
<dbReference type="Ensembl" id="ENST00000533034.1">
    <molecule id="Q04609-9"/>
    <property type="protein sequence ID" value="ENSP00000431463.1"/>
    <property type="gene ID" value="ENSG00000086205.18"/>
</dbReference>
<dbReference type="GeneID" id="2346"/>
<dbReference type="KEGG" id="hsa:2346"/>
<dbReference type="MANE-Select" id="ENST00000256999.7">
    <property type="protein sequence ID" value="ENSP00000256999.2"/>
    <property type="RefSeq nucleotide sequence ID" value="NM_004476.3"/>
    <property type="RefSeq protein sequence ID" value="NP_004467.1"/>
</dbReference>
<dbReference type="UCSC" id="uc001ngy.3">
    <molecule id="Q04609-1"/>
    <property type="organism name" value="human"/>
</dbReference>
<dbReference type="AGR" id="HGNC:3788"/>
<dbReference type="CTD" id="2346"/>
<dbReference type="DisGeNET" id="2346"/>
<dbReference type="GeneCards" id="FOLH1"/>
<dbReference type="HGNC" id="HGNC:3788">
    <property type="gene designation" value="FOLH1"/>
</dbReference>
<dbReference type="HPA" id="ENSG00000086205">
    <property type="expression patterns" value="Tissue enhanced (intestine, prostate)"/>
</dbReference>
<dbReference type="MIM" id="600934">
    <property type="type" value="gene"/>
</dbReference>
<dbReference type="neXtProt" id="NX_Q04609"/>
<dbReference type="OpenTargets" id="ENSG00000086205"/>
<dbReference type="PharmGKB" id="PA28205"/>
<dbReference type="VEuPathDB" id="HostDB:ENSG00000086205"/>
<dbReference type="eggNOG" id="KOG2195">
    <property type="taxonomic scope" value="Eukaryota"/>
</dbReference>
<dbReference type="GeneTree" id="ENSGT01030000234598"/>
<dbReference type="HOGENOM" id="CLU_005688_3_2_1"/>
<dbReference type="InParanoid" id="Q04609"/>
<dbReference type="OMA" id="LWNVIGT"/>
<dbReference type="OrthoDB" id="5841748at2759"/>
<dbReference type="PAN-GO" id="Q04609">
    <property type="GO annotations" value="2 GO annotations based on evolutionary models"/>
</dbReference>
<dbReference type="PhylomeDB" id="Q04609"/>
<dbReference type="TreeFam" id="TF312981"/>
<dbReference type="BRENDA" id="3.4.17.21">
    <property type="organism ID" value="2681"/>
</dbReference>
<dbReference type="PathwayCommons" id="Q04609"/>
<dbReference type="Reactome" id="R-HSA-8963693">
    <property type="pathway name" value="Aspartate and asparagine metabolism"/>
</dbReference>
<dbReference type="SignaLink" id="Q04609"/>
<dbReference type="BioGRID-ORCS" id="2346">
    <property type="hits" value="20 hits in 1153 CRISPR screens"/>
</dbReference>
<dbReference type="ChiTaRS" id="FOLH1">
    <property type="organism name" value="human"/>
</dbReference>
<dbReference type="EvolutionaryTrace" id="Q04609"/>
<dbReference type="GeneWiki" id="Glutamate_carboxypeptidase_II"/>
<dbReference type="GenomeRNAi" id="2346"/>
<dbReference type="Pharos" id="Q04609">
    <property type="development level" value="Tclin"/>
</dbReference>
<dbReference type="PRO" id="PR:Q04609"/>
<dbReference type="Proteomes" id="UP000005640">
    <property type="component" value="Chromosome 11"/>
</dbReference>
<dbReference type="RNAct" id="Q04609">
    <property type="molecule type" value="protein"/>
</dbReference>
<dbReference type="Bgee" id="ENSG00000086205">
    <property type="expression patterns" value="Expressed in duodenum and 102 other cell types or tissues"/>
</dbReference>
<dbReference type="ExpressionAtlas" id="Q04609">
    <property type="expression patterns" value="baseline and differential"/>
</dbReference>
<dbReference type="GO" id="GO:0009986">
    <property type="term" value="C:cell surface"/>
    <property type="evidence" value="ECO:0000314"/>
    <property type="project" value="BHF-UCL"/>
</dbReference>
<dbReference type="GO" id="GO:0005737">
    <property type="term" value="C:cytoplasm"/>
    <property type="evidence" value="ECO:0007669"/>
    <property type="project" value="UniProtKB-SubCell"/>
</dbReference>
<dbReference type="GO" id="GO:0070062">
    <property type="term" value="C:extracellular exosome"/>
    <property type="evidence" value="ECO:0007005"/>
    <property type="project" value="UniProtKB"/>
</dbReference>
<dbReference type="GO" id="GO:0016020">
    <property type="term" value="C:membrane"/>
    <property type="evidence" value="ECO:0000304"/>
    <property type="project" value="ProtInc"/>
</dbReference>
<dbReference type="GO" id="GO:0005886">
    <property type="term" value="C:plasma membrane"/>
    <property type="evidence" value="ECO:0000314"/>
    <property type="project" value="BHF-UCL"/>
</dbReference>
<dbReference type="GO" id="GO:1904492">
    <property type="term" value="F:Ac-Asp-Glu binding"/>
    <property type="evidence" value="ECO:0000314"/>
    <property type="project" value="BHF-UCL"/>
</dbReference>
<dbReference type="GO" id="GO:0004180">
    <property type="term" value="F:carboxypeptidase activity"/>
    <property type="evidence" value="ECO:0000318"/>
    <property type="project" value="GO_Central"/>
</dbReference>
<dbReference type="GO" id="GO:0016805">
    <property type="term" value="F:dipeptidase activity"/>
    <property type="evidence" value="ECO:0007669"/>
    <property type="project" value="UniProtKB-KW"/>
</dbReference>
<dbReference type="GO" id="GO:0046872">
    <property type="term" value="F:metal ion binding"/>
    <property type="evidence" value="ECO:0007669"/>
    <property type="project" value="UniProtKB-KW"/>
</dbReference>
<dbReference type="GO" id="GO:0004181">
    <property type="term" value="F:metallocarboxypeptidase activity"/>
    <property type="evidence" value="ECO:0000314"/>
    <property type="project" value="BHF-UCL"/>
</dbReference>
<dbReference type="GO" id="GO:0008233">
    <property type="term" value="F:peptidase activity"/>
    <property type="evidence" value="ECO:0000303"/>
    <property type="project" value="UniProtKB"/>
</dbReference>
<dbReference type="GO" id="GO:1904493">
    <property type="term" value="F:tetrahydrofolyl-poly(glutamate) polymer binding"/>
    <property type="evidence" value="ECO:0000314"/>
    <property type="project" value="BHF-UCL"/>
</dbReference>
<dbReference type="GO" id="GO:0035609">
    <property type="term" value="P:C-terminal protein deglutamylation"/>
    <property type="evidence" value="ECO:0000314"/>
    <property type="project" value="BHF-UCL"/>
</dbReference>
<dbReference type="GO" id="GO:0006760">
    <property type="term" value="P:folic acid-containing compound metabolic process"/>
    <property type="evidence" value="ECO:0007669"/>
    <property type="project" value="Ensembl"/>
</dbReference>
<dbReference type="GO" id="GO:0006508">
    <property type="term" value="P:proteolysis"/>
    <property type="evidence" value="ECO:0000314"/>
    <property type="project" value="BHF-UCL"/>
</dbReference>
<dbReference type="CDD" id="cd08022">
    <property type="entry name" value="M28_PSMA_like"/>
    <property type="match status" value="1"/>
</dbReference>
<dbReference type="CDD" id="cd02121">
    <property type="entry name" value="PA_GCPII_like"/>
    <property type="match status" value="1"/>
</dbReference>
<dbReference type="FunFam" id="3.40.630.10:FF:000059">
    <property type="entry name" value="Glutamate carboxypeptidase 2"/>
    <property type="match status" value="1"/>
</dbReference>
<dbReference type="FunFam" id="1.20.930.40:FF:000001">
    <property type="entry name" value="N-acetylated-alpha-linked acidic dipeptidase 2"/>
    <property type="match status" value="1"/>
</dbReference>
<dbReference type="FunFam" id="3.50.30.30:FF:000002">
    <property type="entry name" value="N-acetylated-alpha-linked acidic dipeptidase 2"/>
    <property type="match status" value="1"/>
</dbReference>
<dbReference type="Gene3D" id="3.50.30.30">
    <property type="match status" value="1"/>
</dbReference>
<dbReference type="Gene3D" id="1.20.930.40">
    <property type="entry name" value="Transferrin receptor-like, dimerisation domain"/>
    <property type="match status" value="1"/>
</dbReference>
<dbReference type="Gene3D" id="3.40.630.10">
    <property type="entry name" value="Zn peptidases"/>
    <property type="match status" value="1"/>
</dbReference>
<dbReference type="InterPro" id="IPR046450">
    <property type="entry name" value="PA_dom_sf"/>
</dbReference>
<dbReference type="InterPro" id="IPR003137">
    <property type="entry name" value="PA_domain"/>
</dbReference>
<dbReference type="InterPro" id="IPR007484">
    <property type="entry name" value="Peptidase_M28"/>
</dbReference>
<dbReference type="InterPro" id="IPR039373">
    <property type="entry name" value="Peptidase_M28B"/>
</dbReference>
<dbReference type="InterPro" id="IPR007365">
    <property type="entry name" value="TFR-like_dimer_dom"/>
</dbReference>
<dbReference type="InterPro" id="IPR036757">
    <property type="entry name" value="TFR-like_dimer_dom_sf"/>
</dbReference>
<dbReference type="PANTHER" id="PTHR10404:SF36">
    <property type="entry name" value="GLUTAMATE CARBOXYPEPTIDASE 2"/>
    <property type="match status" value="1"/>
</dbReference>
<dbReference type="PANTHER" id="PTHR10404">
    <property type="entry name" value="N-ACETYLATED-ALPHA-LINKED ACIDIC DIPEPTIDASE"/>
    <property type="match status" value="1"/>
</dbReference>
<dbReference type="Pfam" id="PF02225">
    <property type="entry name" value="PA"/>
    <property type="match status" value="1"/>
</dbReference>
<dbReference type="Pfam" id="PF04389">
    <property type="entry name" value="Peptidase_M28"/>
    <property type="match status" value="1"/>
</dbReference>
<dbReference type="Pfam" id="PF04253">
    <property type="entry name" value="TFR_dimer"/>
    <property type="match status" value="1"/>
</dbReference>
<dbReference type="SUPFAM" id="SSF52025">
    <property type="entry name" value="PA domain"/>
    <property type="match status" value="1"/>
</dbReference>
<dbReference type="SUPFAM" id="SSF47672">
    <property type="entry name" value="Transferrin receptor-like dimerisation domain"/>
    <property type="match status" value="1"/>
</dbReference>
<dbReference type="SUPFAM" id="SSF53187">
    <property type="entry name" value="Zn-dependent exopeptidases"/>
    <property type="match status" value="1"/>
</dbReference>
<reference key="1">
    <citation type="journal article" date="1993" name="Cancer Res.">
        <title>Molecular cloning of a complementary DNA encoding a prostate-specific membrane antigen.</title>
        <authorList>
            <person name="Israeli R.S."/>
            <person name="Powell C.T."/>
            <person name="Fair W.R."/>
            <person name="Heston W.D.W."/>
        </authorList>
    </citation>
    <scope>NUCLEOTIDE SEQUENCE [MRNA] (ISOFORM PSMA-1)</scope>
    <scope>PARTIAL PROTEIN SEQUENCE</scope>
    <source>
        <tissue>Prostatic carcinoma</tissue>
    </source>
</reference>
<reference key="2">
    <citation type="journal article" date="1995" name="Cancer Res.">
        <title>Alternatively spliced variants of prostate-specific membrane antigen RNA: ratio of expression as a potential measurement of progression.</title>
        <authorList>
            <person name="Su S.L."/>
            <person name="Huang I.-P."/>
            <person name="Fair W.R."/>
            <person name="Powell C.T."/>
            <person name="Heston W.D.W."/>
        </authorList>
    </citation>
    <scope>NUCLEOTIDE SEQUENCE [MRNA] (ISOFORM PSMA')</scope>
    <source>
        <tissue>Prostate</tissue>
    </source>
</reference>
<reference key="3">
    <citation type="journal article" date="1998" name="Biochim. Biophys. Acta">
        <title>Mapping, genomic organization and promoter analysis of the human prostate-specific membrane antigen gene.</title>
        <authorList>
            <person name="O'Keefe D.S."/>
            <person name="Su S.L."/>
            <person name="Bacich D.J."/>
            <person name="Horiguchi Y."/>
            <person name="Luo Y."/>
            <person name="Powell C.T."/>
            <person name="Zandvliet D."/>
            <person name="Russell P.J."/>
            <person name="Molloy P.L."/>
            <person name="Nowak N.J."/>
            <person name="Shows T.B."/>
            <person name="Mullins C."/>
            <person name="Vonder Haar R.A."/>
            <person name="Fair W.R."/>
            <person name="Heston W.D.W."/>
        </authorList>
    </citation>
    <scope>NUCLEOTIDE SEQUENCE [GENOMIC DNA] (ISOFORM PSMA-1)</scope>
    <scope>VARIANT HIS-75</scope>
</reference>
<reference key="4">
    <citation type="journal article" date="1998" name="J. Pharmacol. Exp. Ther.">
        <title>Molecular characterization of human brain N-acetylated alpha-linked acidic dipeptidase (NAALADase).</title>
        <authorList>
            <person name="Luthi-Carter R."/>
            <person name="Barczak A.K."/>
            <person name="Speno H."/>
            <person name="Coyle J.T."/>
        </authorList>
    </citation>
    <scope>NUCLEOTIDE SEQUENCE [MRNA] (ISOFORM PSMA-1)</scope>
    <source>
        <tissue>Brain</tissue>
    </source>
</reference>
<reference key="5">
    <citation type="journal article" date="1999" name="J. Biol. Chem.">
        <title>Isolation and expression of novel human glutamate carboxypeptidases with N-acetylated alpha-linked acidic dipeptidase and dipeptidyl peptidase IV activity.</title>
        <authorList>
            <person name="Pangalos M.N."/>
            <person name="Neefs J.-M."/>
            <person name="Somers M."/>
            <person name="Verhasselt P."/>
            <person name="Bekkers M."/>
            <person name="van der Helm L."/>
            <person name="Fraiponts E."/>
            <person name="Ashton D."/>
            <person name="Gordon R.D."/>
        </authorList>
    </citation>
    <scope>NUCLEOTIDE SEQUENCE [MRNA] (ISOFORM PSMA-1)</scope>
    <scope>CHARACTERIZATION</scope>
    <source>
        <tissue>Prostate</tissue>
    </source>
</reference>
<reference key="6">
    <citation type="journal article" date="2000" name="Hum. Mol. Genet.">
        <title>Glutamate carboxypeptidase II: a polymorphism associated with lower levels of serum folate and hyperhomocysteinemia.</title>
        <authorList>
            <person name="Devlin A.M."/>
            <person name="Ling E.-H."/>
            <person name="Peerson J.M."/>
            <person name="Fernando S."/>
            <person name="Clarke R."/>
            <person name="Smith A.D."/>
            <person name="Halsted C.H."/>
        </authorList>
    </citation>
    <scope>NUCLEOTIDE SEQUENCE [MRNA] (ISOFORM PSMA-1)</scope>
    <scope>VARIANT TYR-475</scope>
    <scope>TISSUE SPECIFICITY</scope>
    <source>
        <tissue>Jejunum</tissue>
        <tissue>Small intestine</tissue>
    </source>
</reference>
<reference key="7">
    <citation type="journal article" date="2001" name="Mian Yi Xue Za Zhi">
        <title>Cloning and sequencing of Chinese prostate-specific membrane antigen.</title>
        <authorList>
            <person name="Ye C.Z."/>
            <person name="Zhang F.L."/>
            <person name="Zhang Y.K."/>
            <person name="Chen C.Q."/>
        </authorList>
    </citation>
    <scope>NUCLEOTIDE SEQUENCE [MRNA] (ISOFORM PSMA-1)</scope>
    <source>
        <tissue>Prostatic carcinoma</tissue>
    </source>
</reference>
<reference key="8">
    <citation type="journal article" date="2007" name="Prostate">
        <title>High expression of PSM-E correlated with tumor grade in prostate cancer: a new alternatively spliced variant of prostate-specific membrane antigen.</title>
        <authorList>
            <person name="Cao K.Y."/>
            <person name="Mao X.P."/>
            <person name="Wang D.H."/>
            <person name="Xu L."/>
            <person name="Yuan G.Q."/>
            <person name="Dai S.Q."/>
            <person name="Zheng B.J."/>
            <person name="Qiu S.P."/>
        </authorList>
    </citation>
    <scope>NUCLEOTIDE SEQUENCE [MRNA] (ISOFORM PSMA-9)</scope>
</reference>
<reference key="9">
    <citation type="submission" date="1998-11" db="EMBL/GenBank/DDBJ databases">
        <title>Identification of three novel splice variants of prostate-specific membrane antigen.</title>
        <authorList>
            <person name="Peace D.J."/>
            <person name="Zhang Y."/>
            <person name="Holt G."/>
            <person name="Ferrer K.T."/>
            <person name="Heller M."/>
            <person name="Sosman J.A."/>
            <person name="Xue B.H."/>
        </authorList>
    </citation>
    <scope>NUCLEOTIDE SEQUENCE [GENOMIC DNA]</scope>
</reference>
<reference key="10">
    <citation type="submission" date="2005-06" db="EMBL/GenBank/DDBJ databases">
        <title>Identification of a cell growth-inhibiting gene.</title>
        <authorList>
            <person name="Kim J.W."/>
            <person name="Kim H.K."/>
            <person name="Shin S.M."/>
        </authorList>
    </citation>
    <scope>NUCLEOTIDE SEQUENCE [MRNA] (ISOFORM PSMA-8)</scope>
</reference>
<reference key="11">
    <citation type="journal article" date="2004" name="Nat. Genet.">
        <title>Complete sequencing and characterization of 21,243 full-length human cDNAs.</title>
        <authorList>
            <person name="Ota T."/>
            <person name="Suzuki Y."/>
            <person name="Nishikawa T."/>
            <person name="Otsuki T."/>
            <person name="Sugiyama T."/>
            <person name="Irie R."/>
            <person name="Wakamatsu A."/>
            <person name="Hayashi K."/>
            <person name="Sato H."/>
            <person name="Nagai K."/>
            <person name="Kimura K."/>
            <person name="Makita H."/>
            <person name="Sekine M."/>
            <person name="Obayashi M."/>
            <person name="Nishi T."/>
            <person name="Shibahara T."/>
            <person name="Tanaka T."/>
            <person name="Ishii S."/>
            <person name="Yamamoto J."/>
            <person name="Saito K."/>
            <person name="Kawai Y."/>
            <person name="Isono Y."/>
            <person name="Nakamura Y."/>
            <person name="Nagahari K."/>
            <person name="Murakami K."/>
            <person name="Yasuda T."/>
            <person name="Iwayanagi T."/>
            <person name="Wagatsuma M."/>
            <person name="Shiratori A."/>
            <person name="Sudo H."/>
            <person name="Hosoiri T."/>
            <person name="Kaku Y."/>
            <person name="Kodaira H."/>
            <person name="Kondo H."/>
            <person name="Sugawara M."/>
            <person name="Takahashi M."/>
            <person name="Kanda K."/>
            <person name="Yokoi T."/>
            <person name="Furuya T."/>
            <person name="Kikkawa E."/>
            <person name="Omura Y."/>
            <person name="Abe K."/>
            <person name="Kamihara K."/>
            <person name="Katsuta N."/>
            <person name="Sato K."/>
            <person name="Tanikawa M."/>
            <person name="Yamazaki M."/>
            <person name="Ninomiya K."/>
            <person name="Ishibashi T."/>
            <person name="Yamashita H."/>
            <person name="Murakawa K."/>
            <person name="Fujimori K."/>
            <person name="Tanai H."/>
            <person name="Kimata M."/>
            <person name="Watanabe M."/>
            <person name="Hiraoka S."/>
            <person name="Chiba Y."/>
            <person name="Ishida S."/>
            <person name="Ono Y."/>
            <person name="Takiguchi S."/>
            <person name="Watanabe S."/>
            <person name="Yosida M."/>
            <person name="Hotuta T."/>
            <person name="Kusano J."/>
            <person name="Kanehori K."/>
            <person name="Takahashi-Fujii A."/>
            <person name="Hara H."/>
            <person name="Tanase T.-O."/>
            <person name="Nomura Y."/>
            <person name="Togiya S."/>
            <person name="Komai F."/>
            <person name="Hara R."/>
            <person name="Takeuchi K."/>
            <person name="Arita M."/>
            <person name="Imose N."/>
            <person name="Musashino K."/>
            <person name="Yuuki H."/>
            <person name="Oshima A."/>
            <person name="Sasaki N."/>
            <person name="Aotsuka S."/>
            <person name="Yoshikawa Y."/>
            <person name="Matsunawa H."/>
            <person name="Ichihara T."/>
            <person name="Shiohata N."/>
            <person name="Sano S."/>
            <person name="Moriya S."/>
            <person name="Momiyama H."/>
            <person name="Satoh N."/>
            <person name="Takami S."/>
            <person name="Terashima Y."/>
            <person name="Suzuki O."/>
            <person name="Nakagawa S."/>
            <person name="Senoh A."/>
            <person name="Mizoguchi H."/>
            <person name="Goto Y."/>
            <person name="Shimizu F."/>
            <person name="Wakebe H."/>
            <person name="Hishigaki H."/>
            <person name="Watanabe T."/>
            <person name="Sugiyama A."/>
            <person name="Takemoto M."/>
            <person name="Kawakami B."/>
            <person name="Yamazaki M."/>
            <person name="Watanabe K."/>
            <person name="Kumagai A."/>
            <person name="Itakura S."/>
            <person name="Fukuzumi Y."/>
            <person name="Fujimori Y."/>
            <person name="Komiyama M."/>
            <person name="Tashiro H."/>
            <person name="Tanigami A."/>
            <person name="Fujiwara T."/>
            <person name="Ono T."/>
            <person name="Yamada K."/>
            <person name="Fujii Y."/>
            <person name="Ozaki K."/>
            <person name="Hirao M."/>
            <person name="Ohmori Y."/>
            <person name="Kawabata A."/>
            <person name="Hikiji T."/>
            <person name="Kobatake N."/>
            <person name="Inagaki H."/>
            <person name="Ikema Y."/>
            <person name="Okamoto S."/>
            <person name="Okitani R."/>
            <person name="Kawakami T."/>
            <person name="Noguchi S."/>
            <person name="Itoh T."/>
            <person name="Shigeta K."/>
            <person name="Senba T."/>
            <person name="Matsumura K."/>
            <person name="Nakajima Y."/>
            <person name="Mizuno T."/>
            <person name="Morinaga M."/>
            <person name="Sasaki M."/>
            <person name="Togashi T."/>
            <person name="Oyama M."/>
            <person name="Hata H."/>
            <person name="Watanabe M."/>
            <person name="Komatsu T."/>
            <person name="Mizushima-Sugano J."/>
            <person name="Satoh T."/>
            <person name="Shirai Y."/>
            <person name="Takahashi Y."/>
            <person name="Nakagawa K."/>
            <person name="Okumura K."/>
            <person name="Nagase T."/>
            <person name="Nomura N."/>
            <person name="Kikuchi H."/>
            <person name="Masuho Y."/>
            <person name="Yamashita R."/>
            <person name="Nakai K."/>
            <person name="Yada T."/>
            <person name="Nakamura Y."/>
            <person name="Ohara O."/>
            <person name="Isogai T."/>
            <person name="Sugano S."/>
        </authorList>
    </citation>
    <scope>NUCLEOTIDE SEQUENCE [LARGE SCALE MRNA] (ISOFORMS PSMA-1; PSMA-7 AND 10)</scope>
    <source>
        <tissue>Amygdala</tissue>
        <tissue>Corpus callosum</tissue>
        <tissue>Hippocampus</tissue>
    </source>
</reference>
<reference key="12">
    <citation type="journal article" date="2006" name="Nature">
        <title>Human chromosome 11 DNA sequence and analysis including novel gene identification.</title>
        <authorList>
            <person name="Taylor T.D."/>
            <person name="Noguchi H."/>
            <person name="Totoki Y."/>
            <person name="Toyoda A."/>
            <person name="Kuroki Y."/>
            <person name="Dewar K."/>
            <person name="Lloyd C."/>
            <person name="Itoh T."/>
            <person name="Takeda T."/>
            <person name="Kim D.-W."/>
            <person name="She X."/>
            <person name="Barlow K.F."/>
            <person name="Bloom T."/>
            <person name="Bruford E."/>
            <person name="Chang J.L."/>
            <person name="Cuomo C.A."/>
            <person name="Eichler E."/>
            <person name="FitzGerald M.G."/>
            <person name="Jaffe D.B."/>
            <person name="LaButti K."/>
            <person name="Nicol R."/>
            <person name="Park H.-S."/>
            <person name="Seaman C."/>
            <person name="Sougnez C."/>
            <person name="Yang X."/>
            <person name="Zimmer A.R."/>
            <person name="Zody M.C."/>
            <person name="Birren B.W."/>
            <person name="Nusbaum C."/>
            <person name="Fujiyama A."/>
            <person name="Hattori M."/>
            <person name="Rogers J."/>
            <person name="Lander E.S."/>
            <person name="Sakaki Y."/>
        </authorList>
    </citation>
    <scope>NUCLEOTIDE SEQUENCE [LARGE SCALE GENOMIC DNA]</scope>
</reference>
<reference key="13">
    <citation type="submission" date="2005-09" db="EMBL/GenBank/DDBJ databases">
        <authorList>
            <person name="Mural R.J."/>
            <person name="Istrail S."/>
            <person name="Sutton G.G."/>
            <person name="Florea L."/>
            <person name="Halpern A.L."/>
            <person name="Mobarry C.M."/>
            <person name="Lippert R."/>
            <person name="Walenz B."/>
            <person name="Shatkay H."/>
            <person name="Dew I."/>
            <person name="Miller J.R."/>
            <person name="Flanigan M.J."/>
            <person name="Edwards N.J."/>
            <person name="Bolanos R."/>
            <person name="Fasulo D."/>
            <person name="Halldorsson B.V."/>
            <person name="Hannenhalli S."/>
            <person name="Turner R."/>
            <person name="Yooseph S."/>
            <person name="Lu F."/>
            <person name="Nusskern D.R."/>
            <person name="Shue B.C."/>
            <person name="Zheng X.H."/>
            <person name="Zhong F."/>
            <person name="Delcher A.L."/>
            <person name="Huson D.H."/>
            <person name="Kravitz S.A."/>
            <person name="Mouchard L."/>
            <person name="Reinert K."/>
            <person name="Remington K.A."/>
            <person name="Clark A.G."/>
            <person name="Waterman M.S."/>
            <person name="Eichler E.E."/>
            <person name="Adams M.D."/>
            <person name="Hunkapiller M.W."/>
            <person name="Myers E.W."/>
            <person name="Venter J.C."/>
        </authorList>
    </citation>
    <scope>NUCLEOTIDE SEQUENCE [LARGE SCALE GENOMIC DNA]</scope>
</reference>
<reference key="14">
    <citation type="journal article" date="2004" name="Genome Res.">
        <title>The status, quality, and expansion of the NIH full-length cDNA project: the Mammalian Gene Collection (MGC).</title>
        <authorList>
            <consortium name="The MGC Project Team"/>
        </authorList>
    </citation>
    <scope>NUCLEOTIDE SEQUENCE [LARGE SCALE MRNA] (ISOFORM PSMA-8)</scope>
    <source>
        <tissue>Lung</tissue>
    </source>
</reference>
<reference key="15">
    <citation type="journal article" date="1998" name="Cancer Res.">
        <title>Identification, purification, and subcellular localization of prostate-specific membrane antigen PSM' protein in the LNCaP prostatic carcinoma cell line.</title>
        <authorList>
            <person name="Grauer L.S."/>
            <person name="Lawler K.D."/>
            <person name="Marignac J.L."/>
            <person name="Kumar A."/>
            <person name="Goel A.S."/>
            <person name="Wolfert R.L."/>
        </authorList>
    </citation>
    <scope>PROTEIN SEQUENCE OF 60-74</scope>
    <scope>SUBCELLULAR LOCATION</scope>
    <source>
        <tissue>Prostatic carcinoma</tissue>
    </source>
</reference>
<reference key="16">
    <citation type="submission" date="2000-04" db="EMBL/GenBank/DDBJ databases">
        <title>Alternative splicing of the prostate-specific membrane antigen.</title>
        <authorList>
            <person name="Lupold S.E."/>
            <person name="Criley S.C."/>
            <person name="Coffey D.S."/>
        </authorList>
    </citation>
    <scope>NUCLEOTIDE SEQUENCE [MRNA] OF 160-750 (ISOFORM PSMA-4)</scope>
    <scope>NUCLEOTIDE SEQUENCE [MRNA] OF 586-750 (ISOFORM PSMA-3)</scope>
</reference>
<reference key="17">
    <citation type="journal article" date="1998" name="Abstr. - Soc. Neurosci.">
        <title>Molecular cloning of alternatively spliced variants of the peptidase against N-acetylaspartylglutamate (NAAG) from human and rat nervous systems.</title>
        <authorList>
            <person name="Bzdega T."/>
            <person name="She D."/>
            <person name="Turi T."/>
            <person name="Wroblewska B."/>
            <person name="Neale J.H."/>
        </authorList>
    </citation>
    <scope>ALTERNATIVE SPLICING</scope>
</reference>
<reference key="18">
    <citation type="journal article" date="1998" name="Brain Res.">
        <title>Hydrolysis of the neuropeptide N-acetylaspartylglutamate (NAAG) by cloned human glutamate carboxypeptidase II.</title>
        <authorList>
            <person name="Luthi-Carter R."/>
            <person name="Barczak A.K."/>
            <person name="Speno H.D."/>
            <person name="Coyle J.T."/>
        </authorList>
    </citation>
    <scope>CHARACTERIZATION</scope>
</reference>
<reference key="19">
    <citation type="journal article" date="1997" name="Biochim. Biophys. Acta">
        <title>Structure of membrane glutamate carboxypeptidase.</title>
        <authorList>
            <person name="Rawlings N.D."/>
            <person name="Barrett A.J."/>
        </authorList>
    </citation>
    <scope>DOMAIN STRUCTURE</scope>
</reference>
<reference key="20">
    <citation type="journal article" date="1999" name="Mol. Pharmacol.">
        <title>Site-directed mutagenesis of predicted active site residues in glutamate carboxypeptidase II.</title>
        <authorList>
            <person name="Speno H.S."/>
            <person name="Luthi-Carter R."/>
            <person name="Macias W.L."/>
            <person name="Valentine S.L."/>
            <person name="Joshi A.R.T."/>
            <person name="Coyle J.T."/>
        </authorList>
    </citation>
    <scope>MUTAGENESIS</scope>
</reference>
<reference key="21">
    <citation type="journal article" date="2003" name="Nat. Biotechnol.">
        <title>Identification and quantification of N-linked glycoproteins using hydrazide chemistry, stable isotope labeling and mass spectrometry.</title>
        <authorList>
            <person name="Zhang H."/>
            <person name="Li X.-J."/>
            <person name="Martin D.B."/>
            <person name="Aebersold R."/>
        </authorList>
    </citation>
    <scope>GLYCOSYLATION AT ASN-76; ASN-336; ASN-459; ASN-476 AND ASN-638</scope>
</reference>
<reference key="22">
    <citation type="journal article" date="2004" name="Protein Sci.">
        <title>Identification of the N-glycosylation sites on glutamate carboxypeptidase II necessary for proteolytic activity.</title>
        <authorList>
            <person name="Barinka C."/>
            <person name="Sacha P."/>
            <person name="Sklenar J."/>
            <person name="Man P."/>
            <person name="Bezouska K."/>
            <person name="Slusher B.S."/>
            <person name="Konvalinka J."/>
        </authorList>
    </citation>
    <scope>GLYCOSYLATION AT ASN-51; ASN-76; ASN-121; ASN-140; ASN-153; ASN-195; ASN-336; ASN-459; ASN-476 AND ASN-638</scope>
    <scope>MUTAGENESIS OF ASN-51; ASN-76; ASN-121; ASN-140; ASN-153; ASN-195; ASN-336; ASN-459; ASN-476; ASN-638 AND THR-640</scope>
</reference>
<reference key="23">
    <citation type="journal article" date="2004" name="Prostate">
        <title>Comparative analysis of prostate-specific membrane antigen (PSMA) versus a prostate-specific membrane antigen-like gene.</title>
        <authorList>
            <person name="O'Keefe D.S."/>
            <person name="Bacich D.J."/>
            <person name="Heston W.D.W."/>
        </authorList>
    </citation>
    <scope>TISSUE SPECIFICITY</scope>
    <source>
        <tissue>Liver</tissue>
    </source>
</reference>
<reference key="24">
    <citation type="journal article" date="2006" name="World J. Surg.">
        <title>Expression of prostate-specific membrane antigen in normal and malignant human tissues.</title>
        <authorList>
            <person name="Kinoshita Y."/>
            <person name="Kuratsukuri K."/>
            <person name="Landas S."/>
            <person name="Imaida K."/>
            <person name="Rovito P.M. Jr."/>
            <person name="Wang C.Y."/>
            <person name="Haas G.P."/>
        </authorList>
    </citation>
    <scope>TISSUE SPECIFICITY</scope>
</reference>
<reference key="25">
    <citation type="journal article" date="2007" name="Neuroscience">
        <title>Expression of glutamate carboxypeptidase II in human brain.</title>
        <authorList>
            <person name="Sacha P."/>
            <person name="Zamecnik J."/>
            <person name="Barinka C."/>
            <person name="Hlouchova K."/>
            <person name="Vicha A."/>
            <person name="Mlcochova P."/>
            <person name="Hilgert I."/>
            <person name="Eckschlager T."/>
            <person name="Konvalinka J."/>
        </authorList>
    </citation>
    <scope>TISSUE SPECIFICITY</scope>
</reference>
<reference key="26">
    <citation type="journal article" date="2006" name="EMBO J.">
        <title>Structure of glutamate carboxypeptidase II, a drug target in neuronal damage and prostate cancer.</title>
        <authorList>
            <person name="Mesters J.R."/>
            <person name="Barinka C."/>
            <person name="Li W."/>
            <person name="Tsukamoto T."/>
            <person name="Majer P."/>
            <person name="Slusher B.S."/>
            <person name="Konvalinka J."/>
            <person name="Hilgenfeld R."/>
        </authorList>
    </citation>
    <scope>X-RAY CRYSTALLOGRAPHY (2.0 ANGSTROMS) OF 44-750 IN COMPLEXES WITH GLUTAMATE; INHIBITORS; CALCIUM AND ZINC IONS</scope>
    <scope>COFACTOR</scope>
    <scope>SUBUNIT</scope>
    <scope>GLYCOSYLATION AT ASN-76; ASN-121; ASN-140; ASN-195; ASN-459; ASN-476 AND ASN-638</scope>
</reference>
<reference key="27">
    <citation type="journal article" date="2007" name="Acta Crystallogr. D">
        <title>Human glutamate carboxypeptidase II inhibition: structures of GCPII in complex with two potent inhibitors, quisqualate and 2-PMPA.</title>
        <authorList>
            <person name="Mesters J.R."/>
            <person name="Henning K."/>
            <person name="Hilgenfeld R."/>
        </authorList>
    </citation>
    <scope>X-RAY CRYSTALLOGRAPHY (2.19 ANGSTROMS) OF 44-750 IN COMPLEXES WITH THE INHIBITORS QUISQUALATE AND 2-PMPA; CALCIUM AND ZINC IONS</scope>
    <scope>GLYCOSYLATION AT ASN-76; ASN-121; ASN-140; ASN-195; ASN-459; ASN-476 AND ASN-638</scope>
</reference>
<reference key="28">
    <citation type="journal article" date="2007" name="J. Med. Chem.">
        <title>Structural insight into the pharmacophore pocket of human glutamate carboxypeptidase II.</title>
        <authorList>
            <person name="Barinka C."/>
            <person name="Rovenska M."/>
            <person name="Mlcochova P."/>
            <person name="Hlouchova K."/>
            <person name="Plechanovova A."/>
            <person name="Majer P."/>
            <person name="Tsukamoto T."/>
            <person name="Slusher B.S."/>
            <person name="Konvalinka J."/>
            <person name="Lubkowski J."/>
        </authorList>
    </citation>
    <scope>X-RAY CRYSTALLOGRAPHY (1.62 ANGSTROMS) OF 44-750 IN COMPLEXES WITH SUBSTRATE ANALOGS; CALCIUM AND ZINC IONS</scope>
    <scope>ACTIVITY REGULATION</scope>
    <scope>GLYCOSYLATION AT ASN-76; ASN-121; ASN-140 ASN-195; ASN-459; ASN-476 AND ASN-638</scope>
</reference>
<reference key="29">
    <citation type="journal article" date="2008" name="J. Med. Chem.">
        <title>Interactions between human glutamate carboxypeptidase II and urea-based inhibitors: structural characterization.</title>
        <authorList>
            <person name="Barinka C."/>
            <person name="Byun Y."/>
            <person name="Dusich C.L."/>
            <person name="Banerjee S.R."/>
            <person name="Chen Y."/>
            <person name="Castanares M."/>
            <person name="Kozikowski A.P."/>
            <person name="Mease R.C."/>
            <person name="Pomper M.G."/>
            <person name="Lubkowski J."/>
        </authorList>
    </citation>
    <scope>X-RAY CRYSTALLOGRAPHY (1.54 ANGSTROMS) OF 44-750 IN COMPLEXES WITH UREA-BASED INHIBITORS; CALCIUM AND ZINC IONS</scope>
    <scope>GLYCOSYLATION AT ASN-76; ASN-121; ASN-140; ASN-195; ASN-459; ASN-476 AND ASN-638</scope>
</reference>
<reference key="30">
    <citation type="journal article" date="2008" name="J. Mol. Biol.">
        <title>Structural basis of interactions between human glutamate carboxypeptidase II and its substrate analogs.</title>
        <authorList>
            <person name="Barinka C."/>
            <person name="Hlouchova K."/>
            <person name="Rovenska M."/>
            <person name="Majer P."/>
            <person name="Dauter M."/>
            <person name="Hin N."/>
            <person name="Ko Y.-S."/>
            <person name="Tsukamoto T."/>
            <person name="Slusher B.S."/>
            <person name="Konvalinka J."/>
            <person name="Lubkowski J."/>
        </authorList>
    </citation>
    <scope>X-RAY CRYSTALLOGRAPHY (1.5 ANGSTROMS) OF 44-750 IN COMPLEXES WITH SUBSTRATE ANALOGS; CALCIUM AND ZINC IONS</scope>
    <scope>GLYCOSYLATION AT ASN-76; ASN-121; ASN-140; ASN-195; ASN-459; ASN-476 AND ASN-638</scope>
</reference>
<reference key="31">
    <citation type="journal article" date="2009" name="Biochemistry">
        <title>Reaction mechanism of glutamate carboxypeptidase II revealed by mutagenesis, X-ray crystallography, and computational methods.</title>
        <authorList>
            <person name="Klusak V."/>
            <person name="Barinka C."/>
            <person name="Plechanovova A."/>
            <person name="Mlcochova P."/>
            <person name="Konvalinka J."/>
            <person name="Rulisek L."/>
            <person name="Lubkowski J."/>
        </authorList>
    </citation>
    <scope>X-RAY CRYSTALLOGRAPHY (1.71 ANGSTROMS) OF 44-750 IN COMPLEX WITH SUBSTRATE; CALCIUM AND ZINC IONS</scope>
    <scope>GLYCOSYLATION AT ASN-76; ASN-121; ASN-140; ASN-195; ASN-459; ASN-476 AND ASN-638</scope>
    <scope>MUTAGENESIS OF GLU-424</scope>
</reference>
<reference key="32">
    <citation type="journal article" date="2006" name="Science">
        <title>The consensus coding sequences of human breast and colorectal cancers.</title>
        <authorList>
            <person name="Sjoeblom T."/>
            <person name="Jones S."/>
            <person name="Wood L.D."/>
            <person name="Parsons D.W."/>
            <person name="Lin J."/>
            <person name="Barber T.D."/>
            <person name="Mandelker D."/>
            <person name="Leary R.J."/>
            <person name="Ptak J."/>
            <person name="Silliman N."/>
            <person name="Szabo S."/>
            <person name="Buckhaults P."/>
            <person name="Farrell C."/>
            <person name="Meeh P."/>
            <person name="Markowitz S.D."/>
            <person name="Willis J."/>
            <person name="Dawson D."/>
            <person name="Willson J.K.V."/>
            <person name="Gazdar A.F."/>
            <person name="Hartigan J."/>
            <person name="Wu L."/>
            <person name="Liu C."/>
            <person name="Parmigiani G."/>
            <person name="Park B.H."/>
            <person name="Bachman K.E."/>
            <person name="Papadopoulos N."/>
            <person name="Vogelstein B."/>
            <person name="Kinzler K.W."/>
            <person name="Velculescu V.E."/>
        </authorList>
    </citation>
    <scope>VARIANT [LARGE SCALE ANALYSIS] THR-23</scope>
</reference>